<keyword id="KW-0025">Alternative splicing</keyword>
<keyword id="KW-1003">Cell membrane</keyword>
<keyword id="KW-0168">Coated pit</keyword>
<keyword id="KW-0963">Cytoplasm</keyword>
<keyword id="KW-0968">Cytoplasmic vesicle</keyword>
<keyword id="KW-0379">Hydroxylation</keyword>
<keyword id="KW-0472">Membrane</keyword>
<keyword id="KW-0539">Nucleus</keyword>
<keyword id="KW-0597">Phosphoprotein</keyword>
<keyword id="KW-0653">Protein transport</keyword>
<keyword id="KW-1267">Proteomics identification</keyword>
<keyword id="KW-1185">Reference proteome</keyword>
<keyword id="KW-0734">Signal transduction inhibitor</keyword>
<keyword id="KW-0813">Transport</keyword>
<keyword id="KW-0832">Ubl conjugation</keyword>
<evidence type="ECO:0000250" key="1"/>
<evidence type="ECO:0000250" key="2">
    <source>
        <dbReference type="UniProtKB" id="P29067"/>
    </source>
</evidence>
<evidence type="ECO:0000250" key="3">
    <source>
        <dbReference type="UniProtKB" id="Q91YI4"/>
    </source>
</evidence>
<evidence type="ECO:0000269" key="4">
    <source>
    </source>
</evidence>
<evidence type="ECO:0000269" key="5">
    <source>
    </source>
</evidence>
<evidence type="ECO:0000269" key="6">
    <source>
    </source>
</evidence>
<evidence type="ECO:0000269" key="7">
    <source>
    </source>
</evidence>
<evidence type="ECO:0000269" key="8">
    <source>
    </source>
</evidence>
<evidence type="ECO:0000269" key="9">
    <source>
    </source>
</evidence>
<evidence type="ECO:0000269" key="10">
    <source>
    </source>
</evidence>
<evidence type="ECO:0000269" key="11">
    <source>
    </source>
</evidence>
<evidence type="ECO:0000269" key="12">
    <source>
    </source>
</evidence>
<evidence type="ECO:0000269" key="13">
    <source>
    </source>
</evidence>
<evidence type="ECO:0000269" key="14">
    <source>
    </source>
</evidence>
<evidence type="ECO:0000269" key="15">
    <source>
    </source>
</evidence>
<evidence type="ECO:0000269" key="16">
    <source>
    </source>
</evidence>
<evidence type="ECO:0000269" key="17">
    <source>
    </source>
</evidence>
<evidence type="ECO:0000269" key="18">
    <source>
    </source>
</evidence>
<evidence type="ECO:0000269" key="19">
    <source>
    </source>
</evidence>
<evidence type="ECO:0000269" key="20">
    <source>
    </source>
</evidence>
<evidence type="ECO:0000269" key="21">
    <source>
    </source>
</evidence>
<evidence type="ECO:0000269" key="22">
    <source>
    </source>
</evidence>
<evidence type="ECO:0000269" key="23">
    <source>
    </source>
</evidence>
<evidence type="ECO:0000269" key="24">
    <source>
    </source>
</evidence>
<evidence type="ECO:0000269" key="25">
    <source>
    </source>
</evidence>
<evidence type="ECO:0000269" key="26">
    <source>
    </source>
</evidence>
<evidence type="ECO:0000269" key="27">
    <source>
    </source>
</evidence>
<evidence type="ECO:0000269" key="28">
    <source>
    </source>
</evidence>
<evidence type="ECO:0000269" key="29">
    <source>
    </source>
</evidence>
<evidence type="ECO:0000269" key="30">
    <source>
    </source>
</evidence>
<evidence type="ECO:0000269" key="31">
    <source>
    </source>
</evidence>
<evidence type="ECO:0000269" key="32">
    <source>
    </source>
</evidence>
<evidence type="ECO:0000269" key="33">
    <source>
    </source>
</evidence>
<evidence type="ECO:0000269" key="34">
    <source>
    </source>
</evidence>
<evidence type="ECO:0000269" key="35">
    <source>
    </source>
</evidence>
<evidence type="ECO:0000269" key="36">
    <source>
    </source>
</evidence>
<evidence type="ECO:0000269" key="37">
    <source>
    </source>
</evidence>
<evidence type="ECO:0000269" key="38">
    <source>
    </source>
</evidence>
<evidence type="ECO:0000269" key="39">
    <source>
    </source>
</evidence>
<evidence type="ECO:0000269" key="40">
    <source>
    </source>
</evidence>
<evidence type="ECO:0000269" key="41">
    <source>
    </source>
</evidence>
<evidence type="ECO:0000269" key="42">
    <source>
    </source>
</evidence>
<evidence type="ECO:0000269" key="43">
    <source>
    </source>
</evidence>
<evidence type="ECO:0000269" key="44">
    <source>
    </source>
</evidence>
<evidence type="ECO:0000269" key="45">
    <source>
    </source>
</evidence>
<evidence type="ECO:0000269" key="46">
    <source>
    </source>
</evidence>
<evidence type="ECO:0000269" key="47">
    <source>
    </source>
</evidence>
<evidence type="ECO:0000269" key="48">
    <source>
    </source>
</evidence>
<evidence type="ECO:0000269" key="49">
    <source>
    </source>
</evidence>
<evidence type="ECO:0000269" key="50">
    <source>
    </source>
</evidence>
<evidence type="ECO:0000269" key="51">
    <source>
    </source>
</evidence>
<evidence type="ECO:0000303" key="52">
    <source>
    </source>
</evidence>
<evidence type="ECO:0000303" key="53">
    <source>
    </source>
</evidence>
<evidence type="ECO:0000303" key="54">
    <source ref="3"/>
</evidence>
<evidence type="ECO:0000305" key="55"/>
<dbReference type="EMBL" id="Z11501">
    <property type="protein sequence ID" value="CAA77577.1"/>
    <property type="molecule type" value="mRNA"/>
</dbReference>
<dbReference type="EMBL" id="AF106941">
    <property type="protein sequence ID" value="AAC99468.1"/>
    <property type="molecule type" value="mRNA"/>
</dbReference>
<dbReference type="EMBL" id="DQ664180">
    <property type="protein sequence ID" value="ABG47460.1"/>
    <property type="molecule type" value="mRNA"/>
</dbReference>
<dbReference type="EMBL" id="EU883572">
    <property type="protein sequence ID" value="ACG60646.1"/>
    <property type="molecule type" value="mRNA"/>
</dbReference>
<dbReference type="EMBL" id="AK097542">
    <property type="protein sequence ID" value="BAC05094.1"/>
    <property type="molecule type" value="mRNA"/>
</dbReference>
<dbReference type="EMBL" id="AK297181">
    <property type="protein sequence ID" value="BAG59672.1"/>
    <property type="molecule type" value="mRNA"/>
</dbReference>
<dbReference type="EMBL" id="CR450310">
    <property type="protein sequence ID" value="CAG29306.1"/>
    <property type="molecule type" value="mRNA"/>
</dbReference>
<dbReference type="EMBL" id="DQ314866">
    <property type="protein sequence ID" value="ABC40725.1"/>
    <property type="molecule type" value="Genomic_DNA"/>
</dbReference>
<dbReference type="EMBL" id="AC091153">
    <property type="status" value="NOT_ANNOTATED_CDS"/>
    <property type="molecule type" value="Genomic_DNA"/>
</dbReference>
<dbReference type="EMBL" id="CH471108">
    <property type="protein sequence ID" value="EAW90421.1"/>
    <property type="molecule type" value="Genomic_DNA"/>
</dbReference>
<dbReference type="EMBL" id="CH471108">
    <property type="protein sequence ID" value="EAW90422.1"/>
    <property type="molecule type" value="Genomic_DNA"/>
</dbReference>
<dbReference type="EMBL" id="BC007427">
    <property type="protein sequence ID" value="AAH07427.1"/>
    <property type="molecule type" value="mRNA"/>
</dbReference>
<dbReference type="EMBL" id="BC067368">
    <property type="protein sequence ID" value="AAH67368.1"/>
    <property type="molecule type" value="mRNA"/>
</dbReference>
<dbReference type="CCDS" id="CCDS11050.1">
    <molecule id="P32121-1"/>
</dbReference>
<dbReference type="CCDS" id="CCDS11051.1">
    <molecule id="P32121-5"/>
</dbReference>
<dbReference type="CCDS" id="CCDS58504.1">
    <molecule id="P32121-4"/>
</dbReference>
<dbReference type="CCDS" id="CCDS58505.1">
    <molecule id="P32121-2"/>
</dbReference>
<dbReference type="PIR" id="S18984">
    <property type="entry name" value="S18984"/>
</dbReference>
<dbReference type="RefSeq" id="NP_001244257.1">
    <molecule id="P32121-4"/>
    <property type="nucleotide sequence ID" value="NM_001257328.2"/>
</dbReference>
<dbReference type="RefSeq" id="NP_001244258.1">
    <property type="nucleotide sequence ID" value="NM_001257329.1"/>
</dbReference>
<dbReference type="RefSeq" id="NP_001244259.1">
    <molecule id="P32121-3"/>
    <property type="nucleotide sequence ID" value="NM_001257330.2"/>
</dbReference>
<dbReference type="RefSeq" id="NP_001244260.1">
    <molecule id="P32121-2"/>
    <property type="nucleotide sequence ID" value="NM_001257331.2"/>
</dbReference>
<dbReference type="RefSeq" id="NP_001316993.1">
    <property type="nucleotide sequence ID" value="NM_001330064.1"/>
</dbReference>
<dbReference type="RefSeq" id="NP_004304.1">
    <molecule id="P32121-1"/>
    <property type="nucleotide sequence ID" value="NM_004313.4"/>
</dbReference>
<dbReference type="RefSeq" id="NP_945355.1">
    <molecule id="P32121-5"/>
    <property type="nucleotide sequence ID" value="NM_199004.2"/>
</dbReference>
<dbReference type="SMR" id="P32121"/>
<dbReference type="BioGRID" id="106902">
    <property type="interactions" value="445"/>
</dbReference>
<dbReference type="CORUM" id="P32121"/>
<dbReference type="DIP" id="DIP-40089N"/>
<dbReference type="FunCoup" id="P32121">
    <property type="interactions" value="3509"/>
</dbReference>
<dbReference type="IntAct" id="P32121">
    <property type="interactions" value="371"/>
</dbReference>
<dbReference type="MINT" id="P32121"/>
<dbReference type="STRING" id="9606.ENSP00000403701"/>
<dbReference type="MoonDB" id="P32121">
    <property type="type" value="Curated"/>
</dbReference>
<dbReference type="MoonProt" id="P32121"/>
<dbReference type="TCDB" id="8.A.136.1.2">
    <property type="family name" value="the alpha/beta-arrestin (arrb) family"/>
</dbReference>
<dbReference type="GlyGen" id="P32121">
    <property type="glycosylation" value="1 site, 1 O-linked glycan (1 site)"/>
</dbReference>
<dbReference type="iPTMnet" id="P32121"/>
<dbReference type="PhosphoSitePlus" id="P32121"/>
<dbReference type="BioMuta" id="ARRB2"/>
<dbReference type="DMDM" id="20141230"/>
<dbReference type="jPOST" id="P32121"/>
<dbReference type="MassIVE" id="P32121"/>
<dbReference type="PaxDb" id="9606-ENSP00000403701"/>
<dbReference type="PeptideAtlas" id="P32121"/>
<dbReference type="ProteomicsDB" id="35156"/>
<dbReference type="ProteomicsDB" id="54838">
    <molecule id="P32121-1"/>
</dbReference>
<dbReference type="ProteomicsDB" id="54839">
    <molecule id="P32121-2"/>
</dbReference>
<dbReference type="ProteomicsDB" id="54840">
    <molecule id="P32121-3"/>
</dbReference>
<dbReference type="Pumba" id="P32121"/>
<dbReference type="Antibodypedia" id="23372">
    <property type="antibodies" value="363 antibodies from 36 providers"/>
</dbReference>
<dbReference type="DNASU" id="409"/>
<dbReference type="Ensembl" id="ENST00000269260.7">
    <molecule id="P32121-1"/>
    <property type="protein sequence ID" value="ENSP00000269260.2"/>
    <property type="gene ID" value="ENSG00000141480.18"/>
</dbReference>
<dbReference type="Ensembl" id="ENST00000346341.6">
    <molecule id="P32121-2"/>
    <property type="protein sequence ID" value="ENSP00000341895.2"/>
    <property type="gene ID" value="ENSG00000141480.18"/>
</dbReference>
<dbReference type="Ensembl" id="ENST00000381488.10">
    <molecule id="P32121-5"/>
    <property type="protein sequence ID" value="ENSP00000370898.6"/>
    <property type="gene ID" value="ENSG00000141480.18"/>
</dbReference>
<dbReference type="Ensembl" id="ENST00000412477.7">
    <molecule id="P32121-4"/>
    <property type="protein sequence ID" value="ENSP00000403701.3"/>
    <property type="gene ID" value="ENSG00000141480.18"/>
</dbReference>
<dbReference type="GeneID" id="409"/>
<dbReference type="KEGG" id="hsa:409"/>
<dbReference type="MANE-Select" id="ENST00000269260.7">
    <property type="protein sequence ID" value="ENSP00000269260.2"/>
    <property type="RefSeq nucleotide sequence ID" value="NM_004313.4"/>
    <property type="RefSeq protein sequence ID" value="NP_004304.1"/>
</dbReference>
<dbReference type="UCSC" id="uc002fyj.4">
    <molecule id="P32121-1"/>
    <property type="organism name" value="human"/>
</dbReference>
<dbReference type="AGR" id="HGNC:712"/>
<dbReference type="CTD" id="409"/>
<dbReference type="DisGeNET" id="409"/>
<dbReference type="GeneCards" id="ARRB2"/>
<dbReference type="HGNC" id="HGNC:712">
    <property type="gene designation" value="ARRB2"/>
</dbReference>
<dbReference type="HPA" id="ENSG00000141480">
    <property type="expression patterns" value="Tissue enhanced (bone marrow, lymphoid tissue)"/>
</dbReference>
<dbReference type="MIM" id="107941">
    <property type="type" value="gene"/>
</dbReference>
<dbReference type="neXtProt" id="NX_P32121"/>
<dbReference type="OpenTargets" id="ENSG00000141480"/>
<dbReference type="PharmGKB" id="PA60"/>
<dbReference type="VEuPathDB" id="HostDB:ENSG00000141480"/>
<dbReference type="eggNOG" id="KOG3865">
    <property type="taxonomic scope" value="Eukaryota"/>
</dbReference>
<dbReference type="GeneTree" id="ENSGT00950000182887"/>
<dbReference type="HOGENOM" id="CLU_033484_1_1_1"/>
<dbReference type="InParanoid" id="P32121"/>
<dbReference type="OMA" id="TSRHFLM"/>
<dbReference type="OrthoDB" id="298939at2759"/>
<dbReference type="PAN-GO" id="P32121">
    <property type="GO annotations" value="4 GO annotations based on evolutionary models"/>
</dbReference>
<dbReference type="PhylomeDB" id="P32121"/>
<dbReference type="TreeFam" id="TF314260"/>
<dbReference type="PathwayCommons" id="P32121"/>
<dbReference type="Reactome" id="R-HSA-2122948">
    <property type="pathway name" value="Activated NOTCH1 Transmits Signal to the Nucleus"/>
</dbReference>
<dbReference type="Reactome" id="R-HSA-418555">
    <property type="pathway name" value="G alpha (s) signalling events"/>
</dbReference>
<dbReference type="Reactome" id="R-HSA-456926">
    <property type="pathway name" value="Thrombin signalling through proteinase activated receptors (PARs)"/>
</dbReference>
<dbReference type="Reactome" id="R-HSA-5099900">
    <property type="pathway name" value="WNT5A-dependent internalization of FZD4"/>
</dbReference>
<dbReference type="Reactome" id="R-HSA-5635838">
    <property type="pathway name" value="Activation of SMO"/>
</dbReference>
<dbReference type="Reactome" id="R-HSA-5674135">
    <property type="pathway name" value="MAP2K and MAPK activation"/>
</dbReference>
<dbReference type="Reactome" id="R-HSA-5689880">
    <property type="pathway name" value="Ub-specific processing proteases"/>
</dbReference>
<dbReference type="Reactome" id="R-HSA-6802946">
    <property type="pathway name" value="Signaling by moderate kinase activity BRAF mutants"/>
</dbReference>
<dbReference type="Reactome" id="R-HSA-6802948">
    <property type="pathway name" value="Signaling by high-kinase activity BRAF mutants"/>
</dbReference>
<dbReference type="Reactome" id="R-HSA-6802952">
    <property type="pathway name" value="Signaling by BRAF and RAF1 fusions"/>
</dbReference>
<dbReference type="Reactome" id="R-HSA-6802955">
    <property type="pathway name" value="Paradoxical activation of RAF signaling by kinase inactive BRAF"/>
</dbReference>
<dbReference type="Reactome" id="R-HSA-8856825">
    <property type="pathway name" value="Cargo recognition for clathrin-mediated endocytosis"/>
</dbReference>
<dbReference type="Reactome" id="R-HSA-8856828">
    <property type="pathway name" value="Clathrin-mediated endocytosis"/>
</dbReference>
<dbReference type="Reactome" id="R-HSA-9649948">
    <property type="pathway name" value="Signaling downstream of RAS mutants"/>
</dbReference>
<dbReference type="Reactome" id="R-HSA-9656223">
    <property type="pathway name" value="Signaling by RAF1 mutants"/>
</dbReference>
<dbReference type="Reactome" id="R-HSA-9839389">
    <property type="pathway name" value="TGFBR3 regulates TGF-beta signaling"/>
</dbReference>
<dbReference type="SignaLink" id="P32121"/>
<dbReference type="SIGNOR" id="P32121"/>
<dbReference type="BioGRID-ORCS" id="409">
    <property type="hits" value="11 hits in 1157 CRISPR screens"/>
</dbReference>
<dbReference type="CD-CODE" id="8C2F96ED">
    <property type="entry name" value="Centrosome"/>
</dbReference>
<dbReference type="ChiTaRS" id="ARRB2">
    <property type="organism name" value="human"/>
</dbReference>
<dbReference type="GeneWiki" id="Arrestin_beta_2"/>
<dbReference type="GenomeRNAi" id="409"/>
<dbReference type="Pharos" id="P32121">
    <property type="development level" value="Tbio"/>
</dbReference>
<dbReference type="PRO" id="PR:P32121"/>
<dbReference type="Proteomes" id="UP000005640">
    <property type="component" value="Chromosome 17"/>
</dbReference>
<dbReference type="RNAct" id="P32121">
    <property type="molecule type" value="protein"/>
</dbReference>
<dbReference type="Bgee" id="ENSG00000141480">
    <property type="expression patterns" value="Expressed in granulocyte and 168 other cell types or tissues"/>
</dbReference>
<dbReference type="ExpressionAtlas" id="P32121">
    <property type="expression patterns" value="baseline and differential"/>
</dbReference>
<dbReference type="GO" id="GO:0005905">
    <property type="term" value="C:clathrin-coated pit"/>
    <property type="evidence" value="ECO:0007669"/>
    <property type="project" value="UniProtKB-SubCell"/>
</dbReference>
<dbReference type="GO" id="GO:0005737">
    <property type="term" value="C:cytoplasm"/>
    <property type="evidence" value="ECO:0000314"/>
    <property type="project" value="UniProtKB"/>
</dbReference>
<dbReference type="GO" id="GO:0031410">
    <property type="term" value="C:cytoplasmic vesicle"/>
    <property type="evidence" value="ECO:0000314"/>
    <property type="project" value="UniProtKB"/>
</dbReference>
<dbReference type="GO" id="GO:0005829">
    <property type="term" value="C:cytosol"/>
    <property type="evidence" value="ECO:0000314"/>
    <property type="project" value="HPA"/>
</dbReference>
<dbReference type="GO" id="GO:0030139">
    <property type="term" value="C:endocytic vesicle"/>
    <property type="evidence" value="ECO:0000314"/>
    <property type="project" value="UniProtKB"/>
</dbReference>
<dbReference type="GO" id="GO:0030666">
    <property type="term" value="C:endocytic vesicle membrane"/>
    <property type="evidence" value="ECO:0000304"/>
    <property type="project" value="Reactome"/>
</dbReference>
<dbReference type="GO" id="GO:0098978">
    <property type="term" value="C:glutamatergic synapse"/>
    <property type="evidence" value="ECO:0007669"/>
    <property type="project" value="Ensembl"/>
</dbReference>
<dbReference type="GO" id="GO:0005654">
    <property type="term" value="C:nucleoplasm"/>
    <property type="evidence" value="ECO:0000314"/>
    <property type="project" value="HPA"/>
</dbReference>
<dbReference type="GO" id="GO:0005634">
    <property type="term" value="C:nucleus"/>
    <property type="evidence" value="ECO:0000314"/>
    <property type="project" value="UniProtKB"/>
</dbReference>
<dbReference type="GO" id="GO:0005886">
    <property type="term" value="C:plasma membrane"/>
    <property type="evidence" value="ECO:0000314"/>
    <property type="project" value="HPA"/>
</dbReference>
<dbReference type="GO" id="GO:0098794">
    <property type="term" value="C:postsynapse"/>
    <property type="evidence" value="ECO:0007669"/>
    <property type="project" value="GOC"/>
</dbReference>
<dbReference type="GO" id="GO:0031701">
    <property type="term" value="F:angiotensin receptor binding"/>
    <property type="evidence" value="ECO:0000353"/>
    <property type="project" value="UniProtKB"/>
</dbReference>
<dbReference type="GO" id="GO:0031748">
    <property type="term" value="F:D1 dopamine receptor binding"/>
    <property type="evidence" value="ECO:0000353"/>
    <property type="project" value="ARUK-UCL"/>
</dbReference>
<dbReference type="GO" id="GO:0019899">
    <property type="term" value="F:enzyme binding"/>
    <property type="evidence" value="ECO:0000353"/>
    <property type="project" value="UniProtKB"/>
</dbReference>
<dbReference type="GO" id="GO:0001664">
    <property type="term" value="F:G protein-coupled receptor binding"/>
    <property type="evidence" value="ECO:0000353"/>
    <property type="project" value="UniProtKB"/>
</dbReference>
<dbReference type="GO" id="GO:0060090">
    <property type="term" value="F:molecular adaptor activity"/>
    <property type="evidence" value="ECO:0000314"/>
    <property type="project" value="UniProt"/>
</dbReference>
<dbReference type="GO" id="GO:0043422">
    <property type="term" value="F:protein kinase B binding"/>
    <property type="evidence" value="ECO:0007669"/>
    <property type="project" value="Ensembl"/>
</dbReference>
<dbReference type="GO" id="GO:0005102">
    <property type="term" value="F:signaling receptor binding"/>
    <property type="evidence" value="ECO:0000353"/>
    <property type="project" value="UniProtKB"/>
</dbReference>
<dbReference type="GO" id="GO:0031625">
    <property type="term" value="F:ubiquitin protein ligase binding"/>
    <property type="evidence" value="ECO:0000353"/>
    <property type="project" value="UniProtKB"/>
</dbReference>
<dbReference type="GO" id="GO:0007628">
    <property type="term" value="P:adult walking behavior"/>
    <property type="evidence" value="ECO:0007669"/>
    <property type="project" value="Ensembl"/>
</dbReference>
<dbReference type="GO" id="GO:0060326">
    <property type="term" value="P:cell chemotaxis"/>
    <property type="evidence" value="ECO:0000315"/>
    <property type="project" value="UniProtKB"/>
</dbReference>
<dbReference type="GO" id="GO:0002029">
    <property type="term" value="P:desensitization of G protein-coupled receptor signaling pathway"/>
    <property type="evidence" value="ECO:0000315"/>
    <property type="project" value="UniProtKB"/>
</dbReference>
<dbReference type="GO" id="GO:0060079">
    <property type="term" value="P:excitatory postsynaptic potential"/>
    <property type="evidence" value="ECO:0000303"/>
    <property type="project" value="ParkinsonsUK-UCL"/>
</dbReference>
<dbReference type="GO" id="GO:0007212">
    <property type="term" value="P:G protein-coupled dopamine receptor signaling pathway"/>
    <property type="evidence" value="ECO:0000303"/>
    <property type="project" value="ParkinsonsUK-UCL"/>
</dbReference>
<dbReference type="GO" id="GO:0002031">
    <property type="term" value="P:G protein-coupled receptor internalization"/>
    <property type="evidence" value="ECO:0000314"/>
    <property type="project" value="UniProtKB"/>
</dbReference>
<dbReference type="GO" id="GO:0043124">
    <property type="term" value="P:negative regulation of canonical NF-kappaB signal transduction"/>
    <property type="evidence" value="ECO:0000314"/>
    <property type="project" value="UniProt"/>
</dbReference>
<dbReference type="GO" id="GO:0032691">
    <property type="term" value="P:negative regulation of interleukin-1 beta production"/>
    <property type="evidence" value="ECO:0007669"/>
    <property type="project" value="Ensembl"/>
</dbReference>
<dbReference type="GO" id="GO:0032695">
    <property type="term" value="P:negative regulation of interleukin-12 production"/>
    <property type="evidence" value="ECO:0007669"/>
    <property type="project" value="Ensembl"/>
</dbReference>
<dbReference type="GO" id="GO:0032715">
    <property type="term" value="P:negative regulation of interleukin-6 production"/>
    <property type="evidence" value="ECO:0007669"/>
    <property type="project" value="Ensembl"/>
</dbReference>
<dbReference type="GO" id="GO:0045953">
    <property type="term" value="P:negative regulation of natural killer cell mediated cytotoxicity"/>
    <property type="evidence" value="ECO:0000315"/>
    <property type="project" value="UniProtKB"/>
</dbReference>
<dbReference type="GO" id="GO:0032088">
    <property type="term" value="P:negative regulation of NF-kappaB transcription factor activity"/>
    <property type="evidence" value="ECO:0000314"/>
    <property type="project" value="UniProtKB"/>
</dbReference>
<dbReference type="GO" id="GO:0051898">
    <property type="term" value="P:negative regulation of phosphatidylinositol 3-kinase/protein kinase B signal transduction"/>
    <property type="evidence" value="ECO:0000303"/>
    <property type="project" value="ParkinsonsUK-UCL"/>
</dbReference>
<dbReference type="GO" id="GO:0031397">
    <property type="term" value="P:negative regulation of protein ubiquitination"/>
    <property type="evidence" value="ECO:0000314"/>
    <property type="project" value="UniProtKB"/>
</dbReference>
<dbReference type="GO" id="GO:0034122">
    <property type="term" value="P:negative regulation of toll-like receptor signaling pathway"/>
    <property type="evidence" value="ECO:0007669"/>
    <property type="project" value="Ensembl"/>
</dbReference>
<dbReference type="GO" id="GO:0032720">
    <property type="term" value="P:negative regulation of tumor necrosis factor production"/>
    <property type="evidence" value="ECO:0007669"/>
    <property type="project" value="Ensembl"/>
</dbReference>
<dbReference type="GO" id="GO:2000727">
    <property type="term" value="P:positive regulation of cardiac muscle cell differentiation"/>
    <property type="evidence" value="ECO:0007669"/>
    <property type="project" value="Ensembl"/>
</dbReference>
<dbReference type="GO" id="GO:0010613">
    <property type="term" value="P:positive regulation of cardiac muscle hypertrophy"/>
    <property type="evidence" value="ECO:0000305"/>
    <property type="project" value="UniProt"/>
</dbReference>
<dbReference type="GO" id="GO:0070374">
    <property type="term" value="P:positive regulation of ERK1 and ERK2 cascade"/>
    <property type="evidence" value="ECO:0000314"/>
    <property type="project" value="UniProtKB"/>
</dbReference>
<dbReference type="GO" id="GO:0010628">
    <property type="term" value="P:positive regulation of gene expression"/>
    <property type="evidence" value="ECO:0007669"/>
    <property type="project" value="Ensembl"/>
</dbReference>
<dbReference type="GO" id="GO:0051897">
    <property type="term" value="P:positive regulation of phosphatidylinositol 3-kinase/protein kinase B signal transduction"/>
    <property type="evidence" value="ECO:0007669"/>
    <property type="project" value="Ensembl"/>
</dbReference>
<dbReference type="GO" id="GO:0002092">
    <property type="term" value="P:positive regulation of receptor internalization"/>
    <property type="evidence" value="ECO:0000315"/>
    <property type="project" value="UniProtKB"/>
</dbReference>
<dbReference type="GO" id="GO:0032226">
    <property type="term" value="P:positive regulation of synaptic transmission, dopaminergic"/>
    <property type="evidence" value="ECO:0007669"/>
    <property type="project" value="Ensembl"/>
</dbReference>
<dbReference type="GO" id="GO:0098926">
    <property type="term" value="P:postsynaptic signal transduction"/>
    <property type="evidence" value="ECO:0007669"/>
    <property type="project" value="Ensembl"/>
</dbReference>
<dbReference type="GO" id="GO:0043161">
    <property type="term" value="P:proteasome-mediated ubiquitin-dependent protein catabolic process"/>
    <property type="evidence" value="ECO:0000315"/>
    <property type="project" value="UniProtKB"/>
</dbReference>
<dbReference type="GO" id="GO:0015031">
    <property type="term" value="P:protein transport"/>
    <property type="evidence" value="ECO:0007669"/>
    <property type="project" value="UniProtKB-KW"/>
</dbReference>
<dbReference type="GO" id="GO:0016567">
    <property type="term" value="P:protein ubiquitination"/>
    <property type="evidence" value="ECO:0000315"/>
    <property type="project" value="UniProtKB"/>
</dbReference>
<dbReference type="GO" id="GO:0031623">
    <property type="term" value="P:receptor internalization"/>
    <property type="evidence" value="ECO:0000314"/>
    <property type="project" value="BHF-UCL"/>
</dbReference>
<dbReference type="GO" id="GO:0006366">
    <property type="term" value="P:transcription by RNA polymerase II"/>
    <property type="evidence" value="ECO:0000314"/>
    <property type="project" value="UniProtKB"/>
</dbReference>
<dbReference type="GO" id="GO:0007179">
    <property type="term" value="P:transforming growth factor beta receptor signaling pathway"/>
    <property type="evidence" value="ECO:0000314"/>
    <property type="project" value="BHF-UCL"/>
</dbReference>
<dbReference type="FunFam" id="2.60.40.640:FF:000003">
    <property type="entry name" value="beta-arrestin-1 isoform X1"/>
    <property type="match status" value="1"/>
</dbReference>
<dbReference type="FunFam" id="2.60.40.840:FF:000001">
    <property type="entry name" value="beta-arrestin-1 isoform X1"/>
    <property type="match status" value="1"/>
</dbReference>
<dbReference type="Gene3D" id="2.60.40.640">
    <property type="match status" value="1"/>
</dbReference>
<dbReference type="Gene3D" id="2.60.40.840">
    <property type="match status" value="1"/>
</dbReference>
<dbReference type="InterPro" id="IPR000698">
    <property type="entry name" value="Arrestin"/>
</dbReference>
<dbReference type="InterPro" id="IPR014752">
    <property type="entry name" value="Arrestin-like_C"/>
</dbReference>
<dbReference type="InterPro" id="IPR011021">
    <property type="entry name" value="Arrestin-like_N"/>
</dbReference>
<dbReference type="InterPro" id="IPR011022">
    <property type="entry name" value="Arrestin_C-like"/>
</dbReference>
<dbReference type="InterPro" id="IPR017864">
    <property type="entry name" value="Arrestin_CS"/>
</dbReference>
<dbReference type="InterPro" id="IPR014753">
    <property type="entry name" value="Arrestin_N"/>
</dbReference>
<dbReference type="InterPro" id="IPR014756">
    <property type="entry name" value="Ig_E-set"/>
</dbReference>
<dbReference type="PANTHER" id="PTHR11792">
    <property type="entry name" value="ARRESTIN"/>
    <property type="match status" value="1"/>
</dbReference>
<dbReference type="PANTHER" id="PTHR11792:SF20">
    <property type="entry name" value="BETA-ARRESTIN-2"/>
    <property type="match status" value="1"/>
</dbReference>
<dbReference type="Pfam" id="PF02752">
    <property type="entry name" value="Arrestin_C"/>
    <property type="match status" value="1"/>
</dbReference>
<dbReference type="Pfam" id="PF00339">
    <property type="entry name" value="Arrestin_N"/>
    <property type="match status" value="1"/>
</dbReference>
<dbReference type="PRINTS" id="PR00309">
    <property type="entry name" value="ARRESTIN"/>
</dbReference>
<dbReference type="SMART" id="SM01017">
    <property type="entry name" value="Arrestin_C"/>
    <property type="match status" value="1"/>
</dbReference>
<dbReference type="SUPFAM" id="SSF81296">
    <property type="entry name" value="E set domains"/>
    <property type="match status" value="2"/>
</dbReference>
<dbReference type="PROSITE" id="PS00295">
    <property type="entry name" value="ARRESTINS"/>
    <property type="match status" value="1"/>
</dbReference>
<reference key="1">
    <citation type="journal article" date="1992" name="Mol. Cell. Endocrinol.">
        <title>Cloning of a member of the arrestin family from a human thyroid cDNA library.</title>
        <authorList>
            <person name="Rapoport B."/>
            <person name="Kaufman K.D."/>
            <person name="Chamenbalk G.D."/>
        </authorList>
    </citation>
    <scope>NUCLEOTIDE SEQUENCE [MRNA] (ISOFORM 1)</scope>
    <source>
        <tissue>Thyroid</tissue>
    </source>
</reference>
<reference key="2">
    <citation type="submission" date="1998-11" db="EMBL/GenBank/DDBJ databases">
        <title>G-protein coupled receptor interaction with beta-arrestin 2 through specific agonist stimulation.</title>
        <authorList>
            <person name="Yu Q.M."/>
            <person name="Zhou T.H."/>
            <person name="Wu Y.L."/>
            <person name="Cheng Z.J."/>
            <person name="Ma L."/>
            <person name="Pei G."/>
        </authorList>
    </citation>
    <scope>NUCLEOTIDE SEQUENCE [MRNA] (ISOFORM 1)</scope>
    <source>
        <tissue>Brain</tissue>
    </source>
</reference>
<reference key="3">
    <citation type="submission" date="2006-05" db="EMBL/GenBank/DDBJ databases">
        <title>A new splice-variant of beta-arrestin 2 is involved in agonist-induced MC1R endocytosis.</title>
        <authorList>
            <person name="Sanchez-Laorden B.L."/>
            <person name="Jimenez-Cervantes C."/>
            <person name="Garcia-Borron J.C."/>
        </authorList>
    </citation>
    <scope>NUCLEOTIDE SEQUENCE [MRNA] (ISOFORM 2)</scope>
</reference>
<reference key="4">
    <citation type="submission" date="2008-07" db="EMBL/GenBank/DDBJ databases">
        <title>Isolation of cDNA coding for human arrestin, beta 2 (ARRB2), transcript variant 1.</title>
        <authorList>
            <person name="Kaighin V.A."/>
            <person name="Martin A.L."/>
            <person name="Aronstam R.S."/>
        </authorList>
    </citation>
    <scope>NUCLEOTIDE SEQUENCE [MRNA] (ISOFORM 1)</scope>
    <source>
        <tissue>Lung</tissue>
    </source>
</reference>
<reference key="5">
    <citation type="journal article" date="2004" name="Nat. Genet.">
        <title>Complete sequencing and characterization of 21,243 full-length human cDNAs.</title>
        <authorList>
            <person name="Ota T."/>
            <person name="Suzuki Y."/>
            <person name="Nishikawa T."/>
            <person name="Otsuki T."/>
            <person name="Sugiyama T."/>
            <person name="Irie R."/>
            <person name="Wakamatsu A."/>
            <person name="Hayashi K."/>
            <person name="Sato H."/>
            <person name="Nagai K."/>
            <person name="Kimura K."/>
            <person name="Makita H."/>
            <person name="Sekine M."/>
            <person name="Obayashi M."/>
            <person name="Nishi T."/>
            <person name="Shibahara T."/>
            <person name="Tanaka T."/>
            <person name="Ishii S."/>
            <person name="Yamamoto J."/>
            <person name="Saito K."/>
            <person name="Kawai Y."/>
            <person name="Isono Y."/>
            <person name="Nakamura Y."/>
            <person name="Nagahari K."/>
            <person name="Murakami K."/>
            <person name="Yasuda T."/>
            <person name="Iwayanagi T."/>
            <person name="Wagatsuma M."/>
            <person name="Shiratori A."/>
            <person name="Sudo H."/>
            <person name="Hosoiri T."/>
            <person name="Kaku Y."/>
            <person name="Kodaira H."/>
            <person name="Kondo H."/>
            <person name="Sugawara M."/>
            <person name="Takahashi M."/>
            <person name="Kanda K."/>
            <person name="Yokoi T."/>
            <person name="Furuya T."/>
            <person name="Kikkawa E."/>
            <person name="Omura Y."/>
            <person name="Abe K."/>
            <person name="Kamihara K."/>
            <person name="Katsuta N."/>
            <person name="Sato K."/>
            <person name="Tanikawa M."/>
            <person name="Yamazaki M."/>
            <person name="Ninomiya K."/>
            <person name="Ishibashi T."/>
            <person name="Yamashita H."/>
            <person name="Murakawa K."/>
            <person name="Fujimori K."/>
            <person name="Tanai H."/>
            <person name="Kimata M."/>
            <person name="Watanabe M."/>
            <person name="Hiraoka S."/>
            <person name="Chiba Y."/>
            <person name="Ishida S."/>
            <person name="Ono Y."/>
            <person name="Takiguchi S."/>
            <person name="Watanabe S."/>
            <person name="Yosida M."/>
            <person name="Hotuta T."/>
            <person name="Kusano J."/>
            <person name="Kanehori K."/>
            <person name="Takahashi-Fujii A."/>
            <person name="Hara H."/>
            <person name="Tanase T.-O."/>
            <person name="Nomura Y."/>
            <person name="Togiya S."/>
            <person name="Komai F."/>
            <person name="Hara R."/>
            <person name="Takeuchi K."/>
            <person name="Arita M."/>
            <person name="Imose N."/>
            <person name="Musashino K."/>
            <person name="Yuuki H."/>
            <person name="Oshima A."/>
            <person name="Sasaki N."/>
            <person name="Aotsuka S."/>
            <person name="Yoshikawa Y."/>
            <person name="Matsunawa H."/>
            <person name="Ichihara T."/>
            <person name="Shiohata N."/>
            <person name="Sano S."/>
            <person name="Moriya S."/>
            <person name="Momiyama H."/>
            <person name="Satoh N."/>
            <person name="Takami S."/>
            <person name="Terashima Y."/>
            <person name="Suzuki O."/>
            <person name="Nakagawa S."/>
            <person name="Senoh A."/>
            <person name="Mizoguchi H."/>
            <person name="Goto Y."/>
            <person name="Shimizu F."/>
            <person name="Wakebe H."/>
            <person name="Hishigaki H."/>
            <person name="Watanabe T."/>
            <person name="Sugiyama A."/>
            <person name="Takemoto M."/>
            <person name="Kawakami B."/>
            <person name="Yamazaki M."/>
            <person name="Watanabe K."/>
            <person name="Kumagai A."/>
            <person name="Itakura S."/>
            <person name="Fukuzumi Y."/>
            <person name="Fujimori Y."/>
            <person name="Komiyama M."/>
            <person name="Tashiro H."/>
            <person name="Tanigami A."/>
            <person name="Fujiwara T."/>
            <person name="Ono T."/>
            <person name="Yamada K."/>
            <person name="Fujii Y."/>
            <person name="Ozaki K."/>
            <person name="Hirao M."/>
            <person name="Ohmori Y."/>
            <person name="Kawabata A."/>
            <person name="Hikiji T."/>
            <person name="Kobatake N."/>
            <person name="Inagaki H."/>
            <person name="Ikema Y."/>
            <person name="Okamoto S."/>
            <person name="Okitani R."/>
            <person name="Kawakami T."/>
            <person name="Noguchi S."/>
            <person name="Itoh T."/>
            <person name="Shigeta K."/>
            <person name="Senba T."/>
            <person name="Matsumura K."/>
            <person name="Nakajima Y."/>
            <person name="Mizuno T."/>
            <person name="Morinaga M."/>
            <person name="Sasaki M."/>
            <person name="Togashi T."/>
            <person name="Oyama M."/>
            <person name="Hata H."/>
            <person name="Watanabe M."/>
            <person name="Komatsu T."/>
            <person name="Mizushima-Sugano J."/>
            <person name="Satoh T."/>
            <person name="Shirai Y."/>
            <person name="Takahashi Y."/>
            <person name="Nakagawa K."/>
            <person name="Okumura K."/>
            <person name="Nagase T."/>
            <person name="Nomura N."/>
            <person name="Kikuchi H."/>
            <person name="Masuho Y."/>
            <person name="Yamashita R."/>
            <person name="Nakai K."/>
            <person name="Yada T."/>
            <person name="Nakamura Y."/>
            <person name="Ohara O."/>
            <person name="Isogai T."/>
            <person name="Sugano S."/>
        </authorList>
    </citation>
    <scope>NUCLEOTIDE SEQUENCE [LARGE SCALE MRNA] (ISOFORMS 3 AND 4)</scope>
    <source>
        <tissue>Brain</tissue>
        <tissue>Testis</tissue>
    </source>
</reference>
<reference key="6">
    <citation type="submission" date="2004-05" db="EMBL/GenBank/DDBJ databases">
        <title>Cloning of human full open reading frames in Gateway(TM) system entry vector (pDONR201).</title>
        <authorList>
            <person name="Ebert L."/>
            <person name="Schick M."/>
            <person name="Neubert P."/>
            <person name="Schatten R."/>
            <person name="Henze S."/>
            <person name="Korn B."/>
        </authorList>
    </citation>
    <scope>NUCLEOTIDE SEQUENCE [LARGE SCALE MRNA] (ISOFORM 1)</scope>
</reference>
<reference key="7">
    <citation type="submission" date="2005-12" db="EMBL/GenBank/DDBJ databases">
        <authorList>
            <consortium name="NHLBI resequencing and genotyping service (RS&amp;G)"/>
        </authorList>
    </citation>
    <scope>NUCLEOTIDE SEQUENCE [GENOMIC DNA]</scope>
</reference>
<reference key="8">
    <citation type="journal article" date="2006" name="Nature">
        <title>DNA sequence of human chromosome 17 and analysis of rearrangement in the human lineage.</title>
        <authorList>
            <person name="Zody M.C."/>
            <person name="Garber M."/>
            <person name="Adams D.J."/>
            <person name="Sharpe T."/>
            <person name="Harrow J."/>
            <person name="Lupski J.R."/>
            <person name="Nicholson C."/>
            <person name="Searle S.M."/>
            <person name="Wilming L."/>
            <person name="Young S.K."/>
            <person name="Abouelleil A."/>
            <person name="Allen N.R."/>
            <person name="Bi W."/>
            <person name="Bloom T."/>
            <person name="Borowsky M.L."/>
            <person name="Bugalter B.E."/>
            <person name="Butler J."/>
            <person name="Chang J.L."/>
            <person name="Chen C.-K."/>
            <person name="Cook A."/>
            <person name="Corum B."/>
            <person name="Cuomo C.A."/>
            <person name="de Jong P.J."/>
            <person name="DeCaprio D."/>
            <person name="Dewar K."/>
            <person name="FitzGerald M."/>
            <person name="Gilbert J."/>
            <person name="Gibson R."/>
            <person name="Gnerre S."/>
            <person name="Goldstein S."/>
            <person name="Grafham D.V."/>
            <person name="Grocock R."/>
            <person name="Hafez N."/>
            <person name="Hagopian D.S."/>
            <person name="Hart E."/>
            <person name="Norman C.H."/>
            <person name="Humphray S."/>
            <person name="Jaffe D.B."/>
            <person name="Jones M."/>
            <person name="Kamal M."/>
            <person name="Khodiyar V.K."/>
            <person name="LaButti K."/>
            <person name="Laird G."/>
            <person name="Lehoczky J."/>
            <person name="Liu X."/>
            <person name="Lokyitsang T."/>
            <person name="Loveland J."/>
            <person name="Lui A."/>
            <person name="Macdonald P."/>
            <person name="Major J.E."/>
            <person name="Matthews L."/>
            <person name="Mauceli E."/>
            <person name="McCarroll S.A."/>
            <person name="Mihalev A.H."/>
            <person name="Mudge J."/>
            <person name="Nguyen C."/>
            <person name="Nicol R."/>
            <person name="O'Leary S.B."/>
            <person name="Osoegawa K."/>
            <person name="Schwartz D.C."/>
            <person name="Shaw-Smith C."/>
            <person name="Stankiewicz P."/>
            <person name="Steward C."/>
            <person name="Swarbreck D."/>
            <person name="Venkataraman V."/>
            <person name="Whittaker C.A."/>
            <person name="Yang X."/>
            <person name="Zimmer A.R."/>
            <person name="Bradley A."/>
            <person name="Hubbard T."/>
            <person name="Birren B.W."/>
            <person name="Rogers J."/>
            <person name="Lander E.S."/>
            <person name="Nusbaum C."/>
        </authorList>
    </citation>
    <scope>NUCLEOTIDE SEQUENCE [LARGE SCALE GENOMIC DNA]</scope>
</reference>
<reference key="9">
    <citation type="submission" date="2005-09" db="EMBL/GenBank/DDBJ databases">
        <authorList>
            <person name="Mural R.J."/>
            <person name="Istrail S."/>
            <person name="Sutton G.G."/>
            <person name="Florea L."/>
            <person name="Halpern A.L."/>
            <person name="Mobarry C.M."/>
            <person name="Lippert R."/>
            <person name="Walenz B."/>
            <person name="Shatkay H."/>
            <person name="Dew I."/>
            <person name="Miller J.R."/>
            <person name="Flanigan M.J."/>
            <person name="Edwards N.J."/>
            <person name="Bolanos R."/>
            <person name="Fasulo D."/>
            <person name="Halldorsson B.V."/>
            <person name="Hannenhalli S."/>
            <person name="Turner R."/>
            <person name="Yooseph S."/>
            <person name="Lu F."/>
            <person name="Nusskern D.R."/>
            <person name="Shue B.C."/>
            <person name="Zheng X.H."/>
            <person name="Zhong F."/>
            <person name="Delcher A.L."/>
            <person name="Huson D.H."/>
            <person name="Kravitz S.A."/>
            <person name="Mouchard L."/>
            <person name="Reinert K."/>
            <person name="Remington K.A."/>
            <person name="Clark A.G."/>
            <person name="Waterman M.S."/>
            <person name="Eichler E.E."/>
            <person name="Adams M.D."/>
            <person name="Hunkapiller M.W."/>
            <person name="Myers E.W."/>
            <person name="Venter J.C."/>
        </authorList>
    </citation>
    <scope>NUCLEOTIDE SEQUENCE [LARGE SCALE GENOMIC DNA]</scope>
</reference>
<reference key="10">
    <citation type="journal article" date="2004" name="Genome Res.">
        <title>The status, quality, and expansion of the NIH full-length cDNA project: the Mammalian Gene Collection (MGC).</title>
        <authorList>
            <consortium name="The MGC Project Team"/>
        </authorList>
    </citation>
    <scope>NUCLEOTIDE SEQUENCE [LARGE SCALE MRNA] (ISOFORM 1)</scope>
    <source>
        <tissue>Muscle</tissue>
        <tissue>Pancreas</tissue>
    </source>
</reference>
<reference key="11">
    <citation type="journal article" date="1997" name="J. Biol. Chem.">
        <title>A beta-arrestin/green fluorescent protein biosensor for detecting G protein-coupled receptor activation.</title>
        <authorList>
            <person name="Barak L.S."/>
            <person name="Ferguson S.S.G."/>
            <person name="Zhang J."/>
            <person name="Caron M.G."/>
        </authorList>
    </citation>
    <scope>SUBCELLULAR LOCATION</scope>
    <scope>ASSOCIATION WITH GPCRS</scope>
</reference>
<reference key="12">
    <citation type="journal article" date="2000" name="J. Biol. Chem.">
        <title>beta-arrestin differentially regulates the chemokine receptor CXCR4-mediated signaling and receptor internalization, and this implicates multiple interaction sites between beta-arrestin and CXCR4.</title>
        <authorList>
            <person name="Cheng Z.J."/>
            <person name="Zhao J."/>
            <person name="Sun Y."/>
            <person name="Hu W."/>
            <person name="Wu Y.L."/>
            <person name="Cen B."/>
            <person name="Wu G.-X."/>
            <person name="Pei G."/>
        </authorList>
    </citation>
    <scope>FUNCTION IN INTERNALIZATION OF CXCR4</scope>
    <scope>INTERACTION WITH CXCR4</scope>
    <scope>MUTAGENESIS OF VAL-54</scope>
</reference>
<reference key="13">
    <citation type="journal article" date="2000" name="J. Biol. Chem.">
        <title>Differential affinities of visual arrestin, beta arrestin1, and beta arrestin2 for G protein-coupled receptors delineate two major classes of receptors.</title>
        <authorList>
            <person name="Oakley R.H."/>
            <person name="Laporte S.A."/>
            <person name="Holt J.A."/>
            <person name="Caron M.G."/>
            <person name="Barak L.S."/>
        </authorList>
    </citation>
    <scope>SUBCELLULAR LOCATION</scope>
    <scope>ASSOCIATION WITH ANTAGONIST-STIMULATED GPCRS</scope>
</reference>
<reference key="14">
    <citation type="journal article" date="2000" name="Nat. Immunol.">
        <title>Regulation of tyrosine kinase activation and granule release through beta-arrestin by CXCRI.</title>
        <authorList>
            <person name="Barlic J."/>
            <person name="Andrews J.D."/>
            <person name="Kelvin A.A."/>
            <person name="Bosinger S.E."/>
            <person name="DeVries M.E."/>
            <person name="Xu L."/>
            <person name="Dobransky T."/>
            <person name="Feldman R.D."/>
            <person name="Ferguson S.S."/>
            <person name="Kelvin D.J."/>
        </authorList>
    </citation>
    <scope>INTERACTION WITH HCK AND CXCR1</scope>
</reference>
<reference key="15">
    <citation type="journal article" date="2001" name="J. Biol. Chem.">
        <title>Molecular determinants underlying the formation of stable intracellular G protein-coupled receptor-beta-arrestin complexes after receptor endocytosis*.</title>
        <authorList>
            <person name="Oakley R.H."/>
            <person name="Laporte S.A."/>
            <person name="Holt J.A."/>
            <person name="Barak L.S."/>
            <person name="Caron M.G."/>
        </authorList>
    </citation>
    <scope>SUBCELLULAR LOCATION</scope>
    <scope>ASSOCIATION WITH ANTAGONIST-STIMULATED GPCRS</scope>
</reference>
<reference key="16">
    <citation type="journal article" date="2002" name="J. Biol. Chem.">
        <title>Regulation of arrestin-3 phosphorylation by casein kinase II.</title>
        <authorList>
            <person name="Kim Y.-M."/>
            <person name="Barak L.S."/>
            <person name="Caron M.G."/>
            <person name="Benovic J.L."/>
        </authorList>
    </citation>
    <scope>FUNCTION IN INTERNALIZATION OF ADBR2</scope>
    <scope>PHOSPHORYLATION AT THR-382</scope>
    <scope>INTERACTION WITH AP2B1; CLATHRIN AND SRC</scope>
    <scope>SUBCELLULAR LOCATION</scope>
    <scope>MUTAGENESIS OF THR-382</scope>
</reference>
<reference key="17">
    <citation type="journal article" date="2003" name="J. Biol. Chem.">
        <title>Beta-arrestin 2 functions as a G-protein-coupled receptor-activated regulator of oncoprotein Mdm2.</title>
        <authorList>
            <person name="Wang P."/>
            <person name="Gao H."/>
            <person name="Ni Y."/>
            <person name="Wang B."/>
            <person name="Wu Y."/>
            <person name="Ji L."/>
            <person name="Qin L."/>
            <person name="Ma L."/>
            <person name="Pei G."/>
        </authorList>
    </citation>
    <scope>FUNCTION IN TP53-MEDIATED APOPTOSIS</scope>
    <scope>INTERACTION WITH MDM2</scope>
</reference>
<reference key="18">
    <citation type="journal article" date="2003" name="Proc. Natl. Acad. Sci. U.S.A.">
        <title>Desensitization, internalization, and signaling functions of beta-arrestins demonstrated by RNA interference.</title>
        <authorList>
            <person name="Ahn S."/>
            <person name="Nelson C.D."/>
            <person name="Garrison T.R."/>
            <person name="Miller W.E."/>
            <person name="Lefkowitz R.J."/>
        </authorList>
    </citation>
    <scope>FUNCTION IN DESENSITIZATION OF ADRB2</scope>
    <scope>FUNCTION IN INTERNALIZATION OF ADRB2</scope>
    <scope>FUNCTION IN INTERNALIZATION OF AGTR1</scope>
    <scope>FUNCTION IN AGTR1-MEDIATED ERK SIGNALING</scope>
</reference>
<reference key="19">
    <citation type="journal article" date="2003" name="Proc. Natl. Acad. Sci. U.S.A.">
        <title>Independent beta-arrestin 2 and G protein-mediated pathways for angiotensin II activation of extracellular signal-regulated kinases 1 and 2.</title>
        <authorList>
            <person name="Wei H."/>
            <person name="Ahn S."/>
            <person name="Shenoy S.K."/>
            <person name="Karnik S.S."/>
            <person name="Hunyady L."/>
            <person name="Luttrell L.M."/>
            <person name="Lefkowitz R.J."/>
        </authorList>
    </citation>
    <scope>FUNCTION IN AGTR1-MEDIATED ERK SIGNALING</scope>
</reference>
<reference key="20">
    <citation type="journal article" date="2003" name="Science">
        <title>Beta-arrestin 2 mediates endocytosis of type III TGF-beta receptor and down-regulation of its signaling.</title>
        <authorList>
            <person name="Chen W."/>
            <person name="Kirkbride K.C."/>
            <person name="How T."/>
            <person name="Nelson C.D."/>
            <person name="Mo J."/>
            <person name="Frederick J.P."/>
            <person name="Wang X.-F."/>
            <person name="Lefkowitz R.J."/>
            <person name="Blobe G.C."/>
        </authorList>
    </citation>
    <scope>FUNCTION IN ENDOCYTOSIS OF TGFBR2 AND TGFBR3</scope>
    <scope>FUNCTION IN TGF-BETA SIGNALING</scope>
    <scope>SUBCELLULAR LOCATION</scope>
</reference>
<reference key="21">
    <citation type="journal article" date="2004" name="J. Biol. Chem.">
        <title>Reciprocal regulation of angiotensin receptor-activated extracellular signal-regulated kinases by beta-arrestins 1 and 2.</title>
        <authorList>
            <person name="Ahn S."/>
            <person name="Wei H."/>
            <person name="Garrison T.R."/>
            <person name="Lefkowitz R.J."/>
        </authorList>
    </citation>
    <scope>FUNCTION IN AGTR1-MEDIATED ERK SIGNALING</scope>
</reference>
<reference key="22">
    <citation type="journal article" date="2004" name="J. Biol. Chem.">
        <title>Differential desensitization, receptor phosphorylation, beta-arrestin recruitment, and ERK1/2 activation by the two endogenous ligands for the CC chemokine receptor 7.</title>
        <authorList>
            <person name="Kohout T.A."/>
            <person name="Nicholas S.L."/>
            <person name="Perry S.J."/>
            <person name="Reinhart G."/>
            <person name="Junger S."/>
            <person name="Struthers R.S."/>
        </authorList>
    </citation>
    <scope>FUNCTION IN CCR7-MEDIATED ERK SIGNALING</scope>
</reference>
<reference key="23">
    <citation type="journal article" date="2004" name="J. Biol. Chem.">
        <title>Differential kinetic and spatial patterns of beta-arrestin and G protein-mediated ERK activation by the angiotensin II receptor.</title>
        <authorList>
            <person name="Ahn S."/>
            <person name="Shenoy S.K."/>
            <person name="Wei H."/>
            <person name="Lefkowitz R.J."/>
        </authorList>
    </citation>
    <scope>FUNCTION IN AGTR1-MEDIATED ERK SIGNALING</scope>
</reference>
<reference key="24">
    <citation type="journal article" date="2004" name="Mol. Cell">
        <title>Identification of beta-arrestin2 as a G protein-coupled receptor-stimulated regulator of NF-kappaB pathways.</title>
        <authorList>
            <person name="Gao H."/>
            <person name="Sun Y."/>
            <person name="Wu Y."/>
            <person name="Luan B."/>
            <person name="Wang Y."/>
            <person name="Qu B."/>
            <person name="Pei G."/>
        </authorList>
    </citation>
    <scope>FUNCTION IN REGULATION OF NF-KAPPA-B</scope>
    <scope>SUBCELLULAR LOCATION</scope>
    <scope>INTERACTION WITH CHUK AND RELA</scope>
</reference>
<reference key="25">
    <citation type="journal article" date="2004" name="Science">
        <title>Activity-dependent internalization of smoothened mediated by beta-arrestin 2 and GRK2.</title>
        <authorList>
            <person name="Chen W."/>
            <person name="Ren X.R."/>
            <person name="Nelson C.D."/>
            <person name="Barak L.S."/>
            <person name="Chen J.K."/>
            <person name="Beachy P.A."/>
            <person name="de Sauvage F."/>
            <person name="Lefkowitz R.J."/>
        </authorList>
    </citation>
    <scope>FUNCTION IN INTERNALIZATION OF SMO</scope>
</reference>
<reference key="26">
    <citation type="journal article" date="2005" name="J. Biol. Chem.">
        <title>{beta}-Arrestin is crucial for ubiquitination and down-regulation of the insulin-like growth factor-1 receptor by acting as adaptor for the MDM2 E3 ligase.</title>
        <authorList>
            <person name="Girnita L."/>
            <person name="Shenoy S.K."/>
            <person name="Sehat B."/>
            <person name="Vasilcanu R."/>
            <person name="Girnita A."/>
            <person name="Lefkowitz R.J."/>
            <person name="Larsson O."/>
        </authorList>
    </citation>
    <scope>FUNCTION IN UBIQUITINATION OF IGF1R</scope>
    <scope>INTERACTION WITH IGF1R AND MDM2</scope>
</reference>
<reference key="27">
    <citation type="journal article" date="2005" name="J. Biol. Chem.">
        <title>Dynamic interaction between the dual specificity phosphatase MKP7 and the JNK3 scaffold protein beta-arrestin 2.</title>
        <authorList>
            <person name="Willoughby E.A."/>
            <person name="Collins M.K."/>
        </authorList>
    </citation>
    <scope>INTERACTION WITH DUSP16</scope>
    <scope>SUBCELLULAR LOCATION</scope>
</reference>
<reference key="28">
    <citation type="journal article" date="2005" name="J. Biol. Chem.">
        <title>G protein-coupled receptor kinases promote phosphorylation and beta-arrestin-mediated internalization of CCR5 homo- and hetero-oligomers.</title>
        <authorList>
            <person name="Huettenrauch F."/>
            <person name="Pollok-Kopp B."/>
            <person name="Oppermann M."/>
        </authorList>
    </citation>
    <scope>FUNCTION IN INTERNALIZATION OF CCR5</scope>
    <scope>INTERACTION WITH CCR5</scope>
</reference>
<reference key="29">
    <citation type="journal article" date="2005" name="Mol. Pharmacol.">
        <title>Multiple independent functions of arrestins in the regulation of protease-activated receptor-2 signaling and trafficking.</title>
        <authorList>
            <person name="Stalheim L."/>
            <person name="Ding Y."/>
            <person name="Gullapalli A."/>
            <person name="Paing M.M."/>
            <person name="Wolfe B.L."/>
            <person name="Morris D.R."/>
            <person name="Trejo J."/>
        </authorList>
    </citation>
    <scope>FUNCTION IN F2LR1-MEDIATED ERK SIGNALING</scope>
</reference>
<reference key="30">
    <citation type="journal article" date="2005" name="Mol. Pharmacol.">
        <title>Beta-arrestin 2-dependent angiotensin II type 1A receptor-mediated pathway of chemotaxis.</title>
        <authorList>
            <person name="Hunton D.L."/>
            <person name="Barnes W.G."/>
            <person name="Kim J."/>
            <person name="Ren X.-R."/>
            <person name="Violin J.D."/>
            <person name="Reiter E."/>
            <person name="Milligan G."/>
            <person name="Patel D.D."/>
            <person name="Lefkowitz R.J."/>
        </authorList>
    </citation>
    <scope>FUNCTION IN AGTR1-MEDIATED CHEMOTAXIS</scope>
</reference>
<reference key="31">
    <citation type="journal article" date="2005" name="Proc. Natl. Acad. Sci. U.S.A.">
        <title>Different G protein-coupled receptor kinases govern G protein and beta-arrestin-mediated signaling of V2 vasopressin receptor.</title>
        <authorList>
            <person name="Ren X.-R."/>
            <person name="Reiter E."/>
            <person name="Ahn S."/>
            <person name="Kim J."/>
            <person name="Chen W."/>
            <person name="Lefkowitz R.J."/>
        </authorList>
    </citation>
    <scope>FUNCTION IN AVPR2-MEDIATED ERK SIGNALING</scope>
</reference>
<reference key="32">
    <citation type="journal article" date="2005" name="Proc. Natl. Acad. Sci. U.S.A.">
        <title>beta-Arrestins bind and decrease cell-surface abundance of the Na+/H+ exchanger NHE5 isoform.</title>
        <authorList>
            <person name="Szabo E.Z."/>
            <person name="Numata M."/>
            <person name="Lukashova V."/>
            <person name="Iannuzzi P."/>
            <person name="Orlowski J."/>
        </authorList>
    </citation>
    <scope>FUNCTION IN ENDOCYTOSIS OF SLC9A5</scope>
    <scope>INTERACTION WITH SLC9A5</scope>
</reference>
<reference key="33">
    <citation type="journal article" date="2006" name="Dev. Cell">
        <title>Molecular switches involving the AP-2 beta2 appendage regulate endocytic cargo selection and clathrin coat assembly.</title>
        <authorList>
            <person name="Edeling M.A."/>
            <person name="Mishra S.K."/>
            <person name="Keyel P.A."/>
            <person name="Steinhauser A.L."/>
            <person name="Collins B.M."/>
            <person name="Roth R."/>
            <person name="Heuser J.E."/>
            <person name="Owen D.J."/>
            <person name="Traub L.M."/>
        </authorList>
    </citation>
    <scope>INTERACTION WITH AP2B1</scope>
</reference>
<reference key="34">
    <citation type="journal article" date="2006" name="J. Biol. Chem.">
        <title>beta-arrestin-dependent, G protein-independent ERK1/2 activation by the beta2 adrenergic receptor.</title>
        <authorList>
            <person name="Shenoy S.K."/>
            <person name="Drake M.T."/>
            <person name="Nelson C.D."/>
            <person name="Houtz D.A."/>
            <person name="Xiao K."/>
            <person name="Madabushi S."/>
            <person name="Reiter E."/>
            <person name="Premont R.T."/>
            <person name="Lichtarge O."/>
            <person name="Lefkowitz R.J."/>
        </authorList>
    </citation>
    <scope>FUNCTION IN ADRB2-MEDIATED ERK SIGNALING</scope>
</reference>
<reference key="35">
    <citation type="journal article" date="2006" name="J. Biol. Chem.">
        <title>A beta-arrestin binding determinant common to the second intracellular loops of rhodopsin family G protein-coupled receptors.</title>
        <authorList>
            <person name="Marion S."/>
            <person name="Oakley R.H."/>
            <person name="Kim K.-M."/>
            <person name="Caron M.G."/>
            <person name="Barak L.S."/>
        </authorList>
    </citation>
    <scope>INTERACTION WITH HTR2C</scope>
</reference>
<reference key="36">
    <citation type="journal article" date="2006" name="J. Biol. Chem.">
        <title>Distinct beta-arrestin- and G protein-dependent pathways for parathyroid hormone receptor-stimulated ERK1/2 activation.</title>
        <authorList>
            <person name="Gesty-Palmer D."/>
            <person name="Chen M."/>
            <person name="Reiter E."/>
            <person name="Ahn S."/>
            <person name="Nelson C.D."/>
            <person name="Wang S."/>
            <person name="Eckhardt A.E."/>
            <person name="Cowan C.L."/>
            <person name="Spurney R.F."/>
            <person name="Luttrell L.M."/>
            <person name="Lefkowitz R.J."/>
        </authorList>
    </citation>
    <scope>FUNCTION IN PTH1R-MEDIATED ERK SIGNALING</scope>
</reference>
<reference key="37">
    <citation type="journal article" date="2006" name="J. Cell Sci.">
        <title>Novel function of beta-arrestin2 in the nucleus of mature spermatozoa.</title>
        <authorList>
            <person name="Neuhaus E.M."/>
            <person name="Mashukova A."/>
            <person name="Barbour J."/>
            <person name="Wolters D."/>
            <person name="Hatt H."/>
        </authorList>
    </citation>
    <scope>FUNCTION IN THE NUCLEUS OF SPERMATOZOA</scope>
    <scope>SUBCELLULAR LOCATION</scope>
    <scope>INTERACTION WITH DHX8; GAPDHS; H2AFX; KIF14 AND RCC1</scope>
</reference>
<reference key="38">
    <citation type="journal article" date="2006" name="Nat. Immunol.">
        <title>Association of beta-arrestin and TRAF6 negatively regulates Toll-like receptor-interleukin 1 receptor signaling.</title>
        <authorList>
            <person name="Wang Y."/>
            <person name="Tang Y."/>
            <person name="Teng L."/>
            <person name="Wu Y."/>
            <person name="Zhao X."/>
            <person name="Pei G."/>
        </authorList>
    </citation>
    <scope>FUNCTION IN TLR/IL-1 RECEPTOR SIGNALING</scope>
    <scope>INTERACTION WITH TRAF6</scope>
</reference>
<reference key="39">
    <citation type="journal article" date="2006" name="Pigment Cell Res.">
        <title>The melanosomal/lysosomal protein OA1 has properties of a G protein-coupled receptor.</title>
        <authorList>
            <person name="Innamorati G."/>
            <person name="Piccirillo R."/>
            <person name="Bagnato P."/>
            <person name="Palmisano I."/>
            <person name="Schiaffino M.V."/>
        </authorList>
    </citation>
    <scope>INTERACTION WITH GPR143</scope>
</reference>
<reference key="40">
    <citation type="journal article" date="2007" name="J. Biol. Chem.">
        <title>The interaction of endoglin with beta-arrestin2 regulates transforming growth factor-beta-mediated ERK activation and migration in endothelial cells.</title>
        <authorList>
            <person name="Lee N.Y."/>
            <person name="Blobe G.C."/>
        </authorList>
    </citation>
    <scope>FUNCTION IN INTERNALIZATION OF ENG</scope>
    <scope>FUNCTION IN TGF-BETA-MEDIATED ERK SIGNALING</scope>
    <scope>SUBCELLULAR LOCATION</scope>
    <scope>INTERACTION WITH ENG</scope>
</reference>
<reference key="41">
    <citation type="journal article" date="2008" name="J. Neurochem.">
        <title>Post-endocytic fates of delta-opioid receptor are regulated by GRK2-mediated receptor phosphorylation and distinct beta-arrestin isoforms.</title>
        <authorList>
            <person name="Zhang X."/>
            <person name="Wang F."/>
            <person name="Chen X."/>
            <person name="Chen Y."/>
            <person name="Ma L."/>
        </authorList>
    </citation>
    <scope>FUNCTION IN INTERNALIZATION OF OPRD1</scope>
    <scope>FUNCTION IN DEGRADATION OF OPRD1</scope>
</reference>
<reference key="42">
    <citation type="journal article" date="2008" name="Nat. Immunol.">
        <title>An essential function for beta-arrestin 2 in the inhibitory signaling of natural killer cells.</title>
        <authorList>
            <person name="Yu M.-C."/>
            <person name="Su L.-L."/>
            <person name="Zou L."/>
            <person name="Liu Y."/>
            <person name="Wu N."/>
            <person name="Kong L."/>
            <person name="Zhuang Z.-H."/>
            <person name="Sun L."/>
            <person name="Liu H.P."/>
            <person name="Hu J.-H."/>
            <person name="Li D."/>
            <person name="Strominger J.L."/>
            <person name="Zang J.-W."/>
            <person name="Pei G."/>
            <person name="Ge B.-X."/>
        </authorList>
    </citation>
    <scope>FUNCTION IN REGULATION OF INNATE IMMUNE RESPONSE</scope>
    <scope>INTERACTION WITH KIR2DL1; KIR2DL3 AND KIR2DL4</scope>
</reference>
<reference key="43">
    <citation type="journal article" date="2009" name="Proc. Natl. Acad. Sci. U.S.A.">
        <title>The type III TGF-beta receptor regulates epithelial and cancer cell migration through beta-arrestin2-mediated activation of Cdc42.</title>
        <authorList>
            <person name="Mythreye K."/>
            <person name="Blobe G.C."/>
        </authorList>
    </citation>
    <scope>INTERACTION WITH TGFBR3</scope>
</reference>
<reference key="44">
    <citation type="journal article" date="2009" name="Carcinogenesis">
        <title>The type III transforming growth factor-beta receptor negatively regulates nuclear factor kappa B signaling through its interaction with beta-arrestin2.</title>
        <authorList>
            <person name="You H.J."/>
            <person name="How T."/>
            <person name="Blobe G.C."/>
        </authorList>
    </citation>
    <scope>FUNCTION IN TGFBR3-MEDIATED NF-KAPPA-B REGULATION</scope>
</reference>
<reference key="45">
    <citation type="journal article" date="2009" name="Cell. Signal.">
        <title>Inhibition of dynamin prevents CCL2-mediated endocytosis of CCR2 and activation of ERK1/2.</title>
        <authorList>
            <person name="Garcia Lopez M.A."/>
            <person name="Aguado Martinez A."/>
            <person name="Lamaze C."/>
            <person name="Martinez-Alonso C."/>
            <person name="Fischer T."/>
        </authorList>
    </citation>
    <scope>FUNCTION IN INTERNALIZATION OF CCR2</scope>
</reference>
<reference key="46">
    <citation type="journal article" date="2009" name="FEBS Lett.">
        <title>A scanning peptide array approach uncovers association sites within the JNK/beta arrestin signalling complex.</title>
        <authorList>
            <person name="Li X."/>
            <person name="MacLeod R."/>
            <person name="Dunlop A.J."/>
            <person name="Edwards H.V."/>
            <person name="Advant N."/>
            <person name="Gibson L.C."/>
            <person name="Devine N.M."/>
            <person name="Brown K.M."/>
            <person name="Adams D.R."/>
            <person name="Houslay M.D."/>
            <person name="Baillie G.S."/>
        </authorList>
    </citation>
    <scope>INTERACTION WITH MAP2K4/MKK4</scope>
</reference>
<reference key="47">
    <citation type="journal article" date="2009" name="J. Leukoc. Biol.">
        <title>An arrestin-dependent multi-kinase signaling complex mediates MIP-1beta/CCL4 signaling and chemotaxis of primary human macrophages.</title>
        <authorList>
            <person name="Cheung R."/>
            <person name="Malik M."/>
            <person name="Ravyn V."/>
            <person name="Tomkowicz B."/>
            <person name="Ptasznik A."/>
            <person name="Collman R.G."/>
        </authorList>
    </citation>
    <scope>FUNCTION IN MIP-1-BETA-STIMULATED CHEMOTAXIS</scope>
</reference>
<reference key="48">
    <citation type="journal article" date="2009" name="Proc. Natl. Acad. Sci. U.S.A.">
        <title>Beta-arrestin-dependent signaling and trafficking of 7-transmembrane receptors is reciprocally regulated by the deubiquitinase USP33 and the E3 ligase Mdm2.</title>
        <authorList>
            <person name="Shenoy S.K."/>
            <person name="Modi A.S."/>
            <person name="Shukla A.K."/>
            <person name="Xiao K."/>
            <person name="Berthouze M."/>
            <person name="Ahn S."/>
            <person name="Wilkinson K.D."/>
            <person name="Miller W.E."/>
            <person name="Lefkowitz R.J."/>
        </authorList>
    </citation>
    <scope>UBIQUITINATION</scope>
    <scope>DEUBIQUITINATION BY USP33</scope>
    <scope>INTERACTION WITH USP33</scope>
</reference>
<reference key="49">
    <citation type="journal article" date="2010" name="J. Biol. Chem.">
        <title>Site-specific phosphorylation of CXCR4 is dynamically regulated by multiple kinases and results in differential modulation of CXCR4 signaling.</title>
        <authorList>
            <person name="Busillo J.M."/>
            <person name="Armando S."/>
            <person name="Sengupta R."/>
            <person name="Meucci O."/>
            <person name="Bouvier M."/>
            <person name="Benovic J.L."/>
        </authorList>
    </citation>
    <scope>INTERACTION WITH CXCR4</scope>
    <scope>FUNCTION</scope>
</reference>
<reference key="50">
    <citation type="journal article" date="2011" name="J. Cell. Mol. Med.">
        <title>Prolyl hydroxylase 2: a novel regulator of beta2 -adrenoceptor internalization.</title>
        <authorList>
            <person name="Yan B."/>
            <person name="Huo Z."/>
            <person name="Liu Y."/>
            <person name="Lin X."/>
            <person name="Li J."/>
            <person name="Peng L."/>
            <person name="Zhao H."/>
            <person name="Zhou Z.N."/>
            <person name="Liang X."/>
            <person name="Liu Y."/>
            <person name="Zhu W."/>
            <person name="Liang D."/>
            <person name="Li L."/>
            <person name="Sun Y."/>
            <person name="Cui J."/>
            <person name="Chen Y.H."/>
        </authorList>
    </citation>
    <scope>HYDROXYLATION AT PRO-176 AND PRO-181</scope>
</reference>
<reference key="51">
    <citation type="journal article" date="2012" name="Int. J. Biochem. Cell Biol.">
        <title>Carboxy-terminus of CXCR7 regulates receptor localization and function.</title>
        <authorList>
            <person name="Ray P."/>
            <person name="Mihalko L.A."/>
            <person name="Coggins N.L."/>
            <person name="Moudgil P."/>
            <person name="Ehrlich A."/>
            <person name="Luker K.E."/>
            <person name="Luker G.D."/>
        </authorList>
    </citation>
    <scope>INTERACTION WITH ACKR3</scope>
</reference>
<reference key="52">
    <citation type="journal article" date="2012" name="Mol. Pharmacol.">
        <title>Differential signaling by splice variants of the human free fatty acid receptor GPR120.</title>
        <authorList>
            <person name="Watson S.J."/>
            <person name="Brown A.J."/>
            <person name="Holliday N.D."/>
        </authorList>
    </citation>
    <scope>FUNCTION</scope>
    <scope>INTERACTION WITH FFAR4</scope>
</reference>
<reference key="53">
    <citation type="journal article" date="2012" name="PLoS ONE">
        <title>Ubiquitination of CXCR7 controls receptor trafficking.</title>
        <authorList>
            <person name="Canals M."/>
            <person name="Scholten D.J."/>
            <person name="de Munnik S."/>
            <person name="Han M.K."/>
            <person name="Smit M.J."/>
            <person name="Leurs R."/>
        </authorList>
    </citation>
    <scope>FUNCTION</scope>
    <scope>INTERACTION WITH ACKR3</scope>
</reference>
<reference key="54">
    <citation type="journal article" date="2013" name="Immunity">
        <title>Omega-3 fatty acids prevent inflammation and metabolic disorder through inhibition of NLRP3 inflammasome activation.</title>
        <authorList>
            <person name="Yan Y."/>
            <person name="Jiang W."/>
            <person name="Spinetti T."/>
            <person name="Tardivel A."/>
            <person name="Castillo R."/>
            <person name="Bourquin C."/>
            <person name="Guarda G."/>
            <person name="Tian Z."/>
            <person name="Tschopp J."/>
            <person name="Zhou R."/>
        </authorList>
    </citation>
    <scope>FUNCTION</scope>
    <scope>INTERACTION WITH NLRP3</scope>
</reference>
<reference key="55">
    <citation type="journal article" date="2013" name="J. Biol. Chem.">
        <title>Beta-arrestin recruitment and G protein signaling by the atypical human chemokine decoy receptor CCX-CKR.</title>
        <authorList>
            <person name="Watts A.O."/>
            <person name="Verkaar F."/>
            <person name="van der Lee M.M."/>
            <person name="Timmerman C.A."/>
            <person name="Kuijer M."/>
            <person name="van Offenbeek J."/>
            <person name="van Lith L.H."/>
            <person name="Smit M.J."/>
            <person name="Leurs R."/>
            <person name="Zaman G.J."/>
            <person name="Vischer H.F."/>
        </authorList>
    </citation>
    <scope>SUBCELLULAR LOCATION</scope>
    <scope>INTERACTION WITH ACKR4</scope>
</reference>
<reference key="56">
    <citation type="journal article" date="2013" name="J. Cell Sci.">
        <title>Alpha-arrestin 1 (ARRDC1) and beta-arrestins cooperate to mediate Notch degradation in mammals.</title>
        <authorList>
            <person name="Puca L."/>
            <person name="Chastagner P."/>
            <person name="Meas-Yedid V."/>
            <person name="Israel A."/>
            <person name="Brou C."/>
        </authorList>
    </citation>
    <scope>INTERACTION WITH ARRDC1</scope>
</reference>
<reference key="57">
    <citation type="journal article" date="2014" name="J. Biol. Chem.">
        <title>T-cell immunoglobulin and ITIM domain (TIGIT) receptor/poliovirus receptor (PVR) ligand engagement suppresses interferon-gamma production of natural killer cells via beta-arrestin 2-mediated negative signaling.</title>
        <authorList>
            <person name="Li M."/>
            <person name="Xia P."/>
            <person name="Du Y."/>
            <person name="Liu S."/>
            <person name="Huang G."/>
            <person name="Chen J."/>
            <person name="Zhang H."/>
            <person name="Hou N."/>
            <person name="Cheng X."/>
            <person name="Zhou L."/>
            <person name="Li P."/>
            <person name="Yang X."/>
            <person name="Fan Z."/>
        </authorList>
    </citation>
    <scope>FUNCTION</scope>
    <scope>INTERACTION WITH TIGIT</scope>
</reference>
<reference key="58">
    <citation type="journal article" date="2016" name="J. Biol. Chem.">
        <title>Ubiquitin-specific Protease 20 Regulates the Reciprocal Functions of beta-Arrestin2 in Toll-like Receptor 4-promoted Nuclear Factor kappaB (NFkappaB) Activation.</title>
        <authorList>
            <person name="Jean-Charles P.Y."/>
            <person name="Zhang L."/>
            <person name="Wu J.H."/>
            <person name="Han S.O."/>
            <person name="Brian L."/>
            <person name="Freedman N.J."/>
            <person name="Shenoy S.K."/>
        </authorList>
    </citation>
    <scope>FUNCTION</scope>
    <scope>DEUBIQUITINATION BY USP20 AND TRAF6</scope>
</reference>
<reference key="59">
    <citation type="journal article" date="2017" name="Sci. Rep.">
        <title>Orphan GPR61, GPR62 and GPR135 receptors and the melatonin MT2 receptor reciprocally modulate their signaling functions.</title>
        <authorList>
            <person name="Oishi A."/>
            <person name="Karamitri A."/>
            <person name="Gerbier R."/>
            <person name="Lahuna O."/>
            <person name="Ahmad R."/>
            <person name="Jockers R."/>
        </authorList>
    </citation>
    <scope>INTERACTION WITH GPR61; GPR62 AND GPR135</scope>
</reference>
<reference key="60">
    <citation type="journal article" date="2022" name="J. Biol. Chem.">
        <title>Selective phosphorylation of threonine residues defines GPR84-arrestin interactions of biased ligands.</title>
        <authorList>
            <person name="Marsango S."/>
            <person name="Ward R.J."/>
            <person name="Jenkins L."/>
            <person name="Butcher A.J."/>
            <person name="Al Mahmud Z."/>
            <person name="Dwomoh L."/>
            <person name="Nagel F."/>
            <person name="Schulz S."/>
            <person name="Tikhonova I.G."/>
            <person name="Tobin A.B."/>
            <person name="Milligan G."/>
        </authorList>
    </citation>
    <scope>INTERACTION WITH GPR84</scope>
</reference>
<reference key="61">
    <citation type="journal article" date="2023" name="J. Biol. Chem.">
        <title>G protein-receptor kinases 5/6 are the key regulators of G protein-coupled receptor 35-arrestin interactions.</title>
        <authorList>
            <person name="Ganguly A."/>
            <person name="Quon T."/>
            <person name="Jenkins L."/>
            <person name="Joseph B."/>
            <person name="Al-Awar R."/>
            <person name="Chevigne A."/>
            <person name="Tobin A.B."/>
            <person name="Uehling D.E."/>
            <person name="Hoffmann C."/>
            <person name="Drube J."/>
            <person name="Milligan G."/>
        </authorList>
    </citation>
    <scope>INTERACTION WITH GPR35</scope>
</reference>
<proteinExistence type="evidence at protein level"/>
<protein>
    <recommendedName>
        <fullName>Beta-arrestin-2</fullName>
    </recommendedName>
    <alternativeName>
        <fullName>Arrestin beta-2</fullName>
    </alternativeName>
    <alternativeName>
        <fullName evidence="53">Non-visual arrestin-3</fullName>
    </alternativeName>
</protein>
<sequence length="409" mass="46106">MGEKPGTRVFKKSSPNCKLTVYLGKRDFVDHLDKVDPVDGVVLVDPDYLKDRKVFVTLTCAFRYGREDLDVLGLSFRKDLFIATYQAFPPVPNPPRPPTRLQDRLLRKLGQHAHPFFFTIPQNLPCSVTLQPGPEDTGKACGVDFEIRAFCAKSLEEKSHKRNSVRLVIRKVQFAPEKPGPQPSAETTRHFLMSDRSLHLEASLDKELYYHGEPLNVNVHVTNNSTKTVKKIKVSVRQYADICLFSTAQYKCPVAQLEQDDQVSPSSTFCKVYTITPLLSDNREKRGLALDGKLKHEDTNLASSTIVKEGANKEVLGILVSYRVKVKLVVSRGGDVSVELPFVLMHPKPHDHIPLPRPQSAAPETDVPVDTNLIEFDTNYATDDDIVFEDFARLRLKGMKDDDYDDQLC</sequence>
<gene>
    <name type="primary">ARRB2</name>
    <name type="synonym">ARB2</name>
    <name type="synonym">ARR2</name>
</gene>
<accession>P32121</accession>
<accession>B4DLW0</accession>
<accession>B5B0C0</accession>
<accession>B7WPL3</accession>
<accession>D3DTK2</accession>
<accession>H0Y688</accession>
<accession>Q0Z8D3</accession>
<accession>Q2PP19</accession>
<accession>Q6ICT3</accession>
<accession>Q8N7Y2</accession>
<accession>Q9UEQ6</accession>
<name>ARRB2_HUMAN</name>
<organism>
    <name type="scientific">Homo sapiens</name>
    <name type="common">Human</name>
    <dbReference type="NCBI Taxonomy" id="9606"/>
    <lineage>
        <taxon>Eukaryota</taxon>
        <taxon>Metazoa</taxon>
        <taxon>Chordata</taxon>
        <taxon>Craniata</taxon>
        <taxon>Vertebrata</taxon>
        <taxon>Euteleostomi</taxon>
        <taxon>Mammalia</taxon>
        <taxon>Eutheria</taxon>
        <taxon>Euarchontoglires</taxon>
        <taxon>Primates</taxon>
        <taxon>Haplorrhini</taxon>
        <taxon>Catarrhini</taxon>
        <taxon>Hominidae</taxon>
        <taxon>Homo</taxon>
    </lineage>
</organism>
<feature type="chain" id="PRO_0000205199" description="Beta-arrestin-2">
    <location>
        <begin position="1"/>
        <end position="409"/>
    </location>
</feature>
<feature type="region of interest" description="Interaction with TRAF6" evidence="25">
    <location>
        <begin position="240"/>
        <end position="409"/>
    </location>
</feature>
<feature type="region of interest" description="Interaction with AP2B1">
    <location>
        <begin position="363"/>
        <end position="409"/>
    </location>
</feature>
<feature type="short sequence motif" description="[DE]-X(1,2)-F-X-X-[FL]-X-X-X-R motif">
    <location>
        <begin position="385"/>
        <end position="395"/>
    </location>
</feature>
<feature type="modified residue" description="Phosphotyrosine" evidence="3">
    <location>
        <position position="48"/>
    </location>
</feature>
<feature type="modified residue" description="Hydroxyproline; by PHD2" evidence="40">
    <location>
        <position position="176"/>
    </location>
</feature>
<feature type="modified residue" description="Hydroxyproline; by PHD2" evidence="40">
    <location>
        <position position="181"/>
    </location>
</feature>
<feature type="modified residue" description="Phosphoserine" evidence="2">
    <location>
        <position position="360"/>
    </location>
</feature>
<feature type="modified residue" description="Phosphothreonine" evidence="6">
    <location>
        <position position="382"/>
    </location>
</feature>
<feature type="splice variant" id="VSP_008194" description="In isoform 3 and isoform 5." evidence="52">
    <location>
        <begin position="39"/>
        <end position="53"/>
    </location>
</feature>
<feature type="splice variant" id="VSP_044697" description="In isoform 4." evidence="52">
    <original>T</original>
    <variation>TVRMPLPSEGQGAGAGTVSGVG</variation>
    <location>
        <position position="119"/>
    </location>
</feature>
<feature type="splice variant" id="VSP_008195" description="In isoform 2 and isoform 3." evidence="52 54">
    <original>S</original>
    <variation>SAPTPTPPLPVPP</variation>
    <location>
        <position position="360"/>
    </location>
</feature>
<feature type="mutagenesis site" description="Abolishes interaction with CHUK; when associated with A-12; A-230 and A-231.">
    <original>K</original>
    <variation>A</variation>
    <location>
        <position position="11"/>
    </location>
</feature>
<feature type="mutagenesis site" description="Abolishes interaction with CHUK; when associated with A-11; A-230 and A-231.">
    <original>K</original>
    <variation>A</variation>
    <location>
        <position position="12"/>
    </location>
</feature>
<feature type="mutagenesis site" description="Inhibits internalization of CXCR4; no effect on interaction with CXCR4." evidence="4">
    <original>V</original>
    <variation>A</variation>
    <location>
        <position position="54"/>
    </location>
</feature>
<feature type="mutagenesis site" description="Abolishes interaction with CHUK; when associated with A-11; A-12 and A-231.">
    <original>K</original>
    <variation>A</variation>
    <location>
        <position position="230"/>
    </location>
</feature>
<feature type="mutagenesis site" description="Abolishes interaction with CHUK; when associated with A-11; A-12 and A-230.">
    <original>K</original>
    <variation>A</variation>
    <location>
        <position position="231"/>
    </location>
</feature>
<feature type="mutagenesis site" description="Reduces interaction with CHUK; when associated with A-382.">
    <original>S</original>
    <variation>A</variation>
    <variation>D</variation>
    <location>
        <position position="360"/>
    </location>
</feature>
<feature type="mutagenesis site" description="Reduces interaction with CHUK; when associated with A-360." evidence="6">
    <original>T</original>
    <variation>A</variation>
    <variation>D</variation>
    <location>
        <position position="382"/>
    </location>
</feature>
<feature type="mutagenesis site" description="Loss of phosphorylation." evidence="6">
    <original>T</original>
    <variation>A</variation>
    <location>
        <position position="382"/>
    </location>
</feature>
<feature type="sequence conflict" description="In Ref. 5; BAG59672." evidence="55" ref="5">
    <original>S</original>
    <variation>P</variation>
    <location>
        <position position="13"/>
    </location>
</feature>
<feature type="sequence conflict" description="In Ref. 1; CAA77577." evidence="55" ref="1">
    <original>R</original>
    <variation>P</variation>
    <location>
        <position position="189"/>
    </location>
</feature>
<feature type="sequence conflict" description="In Ref. 3; ABG47460." evidence="55" ref="3">
    <original>H</original>
    <variation>R</variation>
    <location>
        <position position="190"/>
    </location>
</feature>
<feature type="sequence conflict" description="In Ref. 6; CAG29306." evidence="55" ref="6">
    <original>L</original>
    <variation>P</variation>
    <location>
        <position position="192"/>
    </location>
</feature>
<feature type="sequence conflict" description="In Ref. 5; BAG59672." evidence="55" ref="5">
    <original>D</original>
    <variation>G</variation>
    <location>
        <position position="366"/>
    </location>
</feature>
<comment type="function">
    <text evidence="4 6 7 8 9 10 11 12 13 14 15 16 17 18 19 20 22 23 25 26 29 30 31 32 33 36 37 39 41 43 45 47 48">Functions in regulating agonist-mediated G-protein coupled receptor (GPCR) signaling by mediating both receptor desensitization and resensitization processes. During homologous desensitization, beta-arrestins bind to the GPRK-phosphorylated receptor and sterically preclude its coupling to the cognate G-protein; the binding appears to require additional receptor determinants exposed only in the active receptor conformation. The beta-arrestins target many receptors for internalization by acting as endocytic adapters (CLASPs, clathrin-associated sorting proteins) and recruiting the GPRCs to the adapter protein 2 complex 2 (AP-2) in clathrin-coated pits (CCPs). However, the extent of beta-arrestin involvement appears to vary significantly depending on the receptor, agonist and cell type. Internalized arrestin-receptor complexes traffic to intracellular endosomes, where they remain uncoupled from G-proteins. Two different modes of arrestin-mediated internalization occur. Class A receptors, like ADRB2, OPRM1, ENDRA, D1AR and ADRA1B dissociate from beta-arrestin at or near the plasma membrane and undergo rapid recycling. Class B receptors, like AVPR2, AGTR1, NTSR1, TRHR and TACR1 internalize as a complex with arrestin and traffic with it to endosomal vesicles, presumably as desensitized receptors, for extended periods of time. Receptor resensitization then requires that receptor-bound arrestin is removed so that the receptor can be dephosphorylated and returned to the plasma membrane. Mediates endocytosis of CCR7 following ligation of CCL19 but not CCL21. Involved in internalization of P2RY1, P2RY4, P2RY6 and P2RY11 and ATP-stimulated internalization of P2RY2. Involved in phosphorylation-dependent internalization of OPRD1 and subsequent recycling or degradation. Involved in ubiquitination of IGF1R. Beta-arrestins function as multivalent adapter proteins that can switch the GPCR from a G-protein signaling mode that transmits short-lived signals from the plasma membrane via small molecule second messengers and ion channels to a beta-arrestin signaling mode that transmits a distinct set of signals that are initiated as the receptor internalizes and transits the intracellular compartment. Acts as a signaling scaffold for MAPK pathways such as MAPK1/3 (ERK1/2) and MAPK10 (JNK3). ERK1/2 and JNK3 activated by the beta-arrestin scaffold are largely excluded from the nucleus and confined to cytoplasmic locations such as endocytic vesicles, also called beta-arrestin signalosomes. Acts as a signaling scaffold for the AKT1 pathway. GPCRs for which the beta-arrestin-mediated signaling relies on both ARRB1 and ARRB2 (codependent regulation) include ADRB2, F2RL1 and PTH1R. For some GPCRs the beta-arrestin-mediated signaling relies on either ARRB1 or ARRB2 and is inhibited by the other respective beta-arrestin form (reciprocal regulation). Increases ERK1/2 signaling in AGTR1- and AVPR2-mediated activation (reciprocal regulation). Involved in CCR7-mediated ERK1/2 signaling involving ligand CCL19. Is involved in type-1A angiotensin II receptor/AGTR1-mediated ERK activity. Is involved in type-1A angiotensin II receptor/AGTR1-mediated MAPK10 activity. Is involved in dopamine-stimulated AKT1 activity in the striatum by disrupting the association of AKT1 with its negative regulator PP2A. Involved in AGTR1-mediated chemotaxis. Appears to function as signaling scaffold involved in regulation of MIP-1-beta-stimulated CCR5-dependent chemotaxis. Involved in attenuation of NF-kappa-B-dependent transcription in response to GPCR or cytokine stimulation by interacting with and stabilizing CHUK. Suppresses UV-induced NF-kappa-B-dependent activation by interacting with CHUK. The function is promoted by stimulation of ADRB2 and dephosphorylation of ARRB2. Involved in p53/TP53-mediated apoptosis by regulating MDM2 and reducing the MDM2-mediated degradation of p53/TP53. May serve as nuclear messenger for GPCRs. Upon stimulation of OR1D2, may be involved in regulation of gene expression during the early processes of fertilization. Also involved in regulation of receptors other than GPCRs. Involved in endocytosis of TGFBR2 and TGFBR3 and down-regulates TGF-beta signaling such as NF-kappa-B activation. Involved in endocytosis of low-density lipoprotein receptor/LDLR. Involved in endocytosis of smoothened homolog/Smo, which also requires GRK2. Involved in endocytosis of SLC9A5. Involved in endocytosis of ENG and subsequent TGF-beta-mediated ERK activation and migration of epithelial cells. Involved in Toll-like receptor and IL-1 receptor signaling through the interaction with TRAF6 which prevents TRAF6 autoubiquitination and oligomerization required for activation of NF-kappa-B and JUN (PubMed:26839314). Involved in insulin resistance by acting as insulin-induced signaling scaffold for SRC, AKT1 and INSR. Involved in regulation of inhibitory signaling of natural killer cells by recruiting PTPN6 and PTPN11 to KIR2DL1. Involved in IL8-mediated granule release in neutrophils. Involved in the internalization of the atypical chemokine receptor ACKR3. Acts as an adapter protein coupling FFAR4 receptor to specific downstream signaling pathways, as well as mediating receptor endocytosis (PubMed:22282525, PubMed:23809162). During the activation step of NLRP3 inflammasome, directly associates with NLRP3 leading to inhibition of pro-inflammatory cytokine release and inhibition of inflammation (PubMed:23809162).</text>
</comment>
<comment type="subunit">
    <text evidence="1 4 5 6 7 13 19 20 21 22 24 25 27 28 29 30 32 33 34 35 38 39 41 42 43 44 45 46 47 48 49 50 51 55">Homooligomer; the self-association is mediated by InsP6-binding (Probable). Heterooligomer with ARRB1; the association is mediated by InsP6-binding. Interacts with ADRB2 and CHRM2. Interacts with PDE4A. Interacts with PDE4D. Interacts with MAPK10, MAPK1 and MAPK3. Interacts with DRD2. Interacts with FSHR. Interacts with CLTC. Interacts with HTR2C. Interacts with CCR5. Interacts with CXCR4. Interacts with SRC. Interacts with DUSP16; the interaction is interrupted by stimulation of AGTR1 and activation of MAPK10. Interacts with CHUK; the interaction is enhanced stimulation of ADRB2. Interacts with RELA. Interacts with MDM2; the interaction is enhanced by activation of GPCRs. Interacts with SLC9A5. Interacts with TRAF6 (PubMed:26839314). Interacts with IGF1R. Interacts with ENG. Interacts with KIR2DL1, KIR2DL3 and KIR2DL4. Interacts with LDLR. Interacts with AP2B1. Interacts with C5AR1. Interacts with RAF1. Interacts with MAP2K1. Interacts with MAPK1. Interacts with MAPK10; the interaction enhances MAPK10 activation by MAP3K5. Interacts with MAP2K4; the interaction is enhanced by presence of MAP3K5 and MAPK10. Interacts with MAP3K5. Interacts with AKT1. Interacts with IKBKB and MAP3K14. Interacts with SMO (activated). Interacts with GSK3A and GSK3B. Associates with protein phosphatase 2A (PP2A) (By similarity). Interacts with DHX8; the interaction is detected in the nucleus upon OR1D2 stimulation. Interacts with GAPDHS; the interaction is detected in the nucleus upon OR1D2 stimulation. Interacts with H2AFX; the interaction is detected in the nucleus upon OR1D2 stimulation. Interacts with KIF14; the interaction is detected in the nucleus upon OR1D2 stimulation. Interacts with RCC1; the interaction is detected in the nucleus upon OR1D2 stimulation. Interacts with CXCR4; the interaction is dependent on C-terminal phosphorylation of CXCR4 and allows activation of MAPK1 and MAPK3. Interacts with GPR143. Interacts with HCK and CXCR1 (phosphorylated). Interacts with ACKR3 and ACKR4. Interacts with ARRDC1; the interaction is direct (PubMed:23886940). Interacts with GPR61, GPR62 and GPR135 (PubMed:28827538). Interacts (via NACHT and LRR domains) with NLRP3; this interaction is direct and inducible by omega-3 polyunsaturated fatty acids (PUFAs) (PubMed:23809162). Interacts with FFAR4 (via C-terminus); this interaction is stimulated by long-chain fatty acids (LCFAs) (PubMed:22282525). Interacts with GPR35 (PubMed:37660910). Interacts with GPR84 (PubMed:35427647). Interacts with TIGIT; this interaction inhibits the NF-kappa-B pathway (PubMed:24817116). Interacts with TGFBR3 (PubMed:19416857, PubMed:19325136).</text>
</comment>
<comment type="interaction">
    <interactant intactId="EBI-714559">
        <id>P32121</id>
    </interactant>
    <interactant intactId="EBI-491169">
        <id>P07550</id>
        <label>ADRB2</label>
    </interactant>
    <organismsDiffer>false</organismsDiffer>
    <experiments>3</experiments>
</comment>
<comment type="interaction">
    <interactant intactId="EBI-714559">
        <id>P32121</id>
    </interactant>
    <interactant intactId="EBI-397435">
        <id>P62158</id>
        <label>CALM3</label>
    </interactant>
    <organismsDiffer>false</organismsDiffer>
    <experiments>3</experiments>
</comment>
<comment type="interaction">
    <interactant intactId="EBI-714559">
        <id>P32121</id>
    </interactant>
    <interactant intactId="EBI-354967">
        <id>Q00610</id>
        <label>CLTC</label>
    </interactant>
    <organismsDiffer>false</organismsDiffer>
    <experiments>6</experiments>
</comment>
<comment type="interaction">
    <interactant intactId="EBI-714559">
        <id>P32121</id>
    </interactant>
    <interactant intactId="EBI-6624559">
        <id>P25101</id>
        <label>EDNRA</label>
    </interactant>
    <organismsDiffer>false</organismsDiffer>
    <experiments>2</experiments>
</comment>
<comment type="interaction">
    <interactant intactId="EBI-714559">
        <id>P32121</id>
    </interactant>
    <interactant intactId="EBI-351506">
        <id>P06396</id>
        <label>GSN</label>
    </interactant>
    <organismsDiffer>false</organismsDiffer>
    <experiments>3</experiments>
</comment>
<comment type="interaction">
    <interactant intactId="EBI-714559">
        <id>P32121</id>
    </interactant>
    <interactant intactId="EBI-351896">
        <id>P11142</id>
        <label>HSPA8</label>
    </interactant>
    <organismsDiffer>false</organismsDiffer>
    <experiments>4</experiments>
</comment>
<comment type="interaction">
    <interactant intactId="EBI-714559">
        <id>P32121</id>
    </interactant>
    <interactant intactId="EBI-15558981">
        <id>P06213-1</id>
        <label>INSR</label>
    </interactant>
    <organismsDiffer>false</organismsDiffer>
    <experiments>2</experiments>
</comment>
<comment type="interaction">
    <interactant intactId="EBI-714559">
        <id>P32121</id>
    </interactant>
    <interactant intactId="EBI-476263">
        <id>Q99683</id>
        <label>MAP3K5</label>
    </interactant>
    <organismsDiffer>false</organismsDiffer>
    <experiments>2</experiments>
</comment>
<comment type="interaction">
    <interactant intactId="EBI-714559">
        <id>P32121</id>
    </interactant>
    <interactant intactId="EBI-713568">
        <id>P45984</id>
        <label>MAPK9</label>
    </interactant>
    <organismsDiffer>false</organismsDiffer>
    <experiments>9</experiments>
</comment>
<comment type="interaction">
    <interactant intactId="EBI-714559">
        <id>P32121</id>
    </interactant>
    <interactant intactId="EBI-346967">
        <id>P19338</id>
        <label>NCL</label>
    </interactant>
    <organismsDiffer>false</organismsDiffer>
    <experiments>3</experiments>
</comment>
<comment type="interaction">
    <interactant intactId="EBI-714559">
        <id>P32121</id>
    </interactant>
    <interactant intactId="EBI-396155">
        <id>Q14978</id>
        <label>NOLC1</label>
    </interactant>
    <organismsDiffer>false</organismsDiffer>
    <experiments>6</experiments>
</comment>
<comment type="interaction">
    <interactant intactId="EBI-714559">
        <id>P32121</id>
    </interactant>
    <interactant intactId="EBI-1642831">
        <id>Q08499</id>
        <label>PDE4D</label>
    </interactant>
    <organismsDiffer>false</organismsDiffer>
    <experiments>2</experiments>
</comment>
<comment type="interaction">
    <interactant intactId="EBI-714559">
        <id>P32121</id>
    </interactant>
    <interactant intactId="EBI-8095525">
        <id>Q08499-2</id>
        <label>PDE4D</label>
    </interactant>
    <organismsDiffer>false</organismsDiffer>
    <experiments>2</experiments>
</comment>
<comment type="interaction">
    <interactant intactId="EBI-714559">
        <id>P32121</id>
    </interactant>
    <interactant intactId="EBI-353408">
        <id>P14618</id>
        <label>PKM</label>
    </interactant>
    <organismsDiffer>false</organismsDiffer>
    <experiments>4</experiments>
</comment>
<comment type="interaction">
    <interactant intactId="EBI-714559">
        <id>P32121</id>
    </interactant>
    <interactant intactId="EBI-989143">
        <id>P35813</id>
        <label>PPM1A</label>
    </interactant>
    <organismsDiffer>false</organismsDiffer>
    <experiments>3</experiments>
</comment>
<comment type="interaction">
    <interactant intactId="EBI-714559">
        <id>P32121</id>
    </interactant>
    <interactant intactId="EBI-1047039">
        <id>O75688</id>
        <label>PPM1B</label>
    </interactant>
    <organismsDiffer>false</organismsDiffer>
    <experiments>4</experiments>
</comment>
<comment type="interaction">
    <interactant intactId="EBI-714559">
        <id>P32121</id>
    </interactant>
    <interactant intactId="EBI-395940">
        <id>Q13523</id>
        <label>PRP4K</label>
    </interactant>
    <organismsDiffer>false</organismsDiffer>
    <experiments>3</experiments>
</comment>
<comment type="interaction">
    <interactant intactId="EBI-714559">
        <id>P32121</id>
    </interactant>
    <interactant intactId="EBI-1055001">
        <id>P06702</id>
        <label>S100A9</label>
    </interactant>
    <organismsDiffer>false</organismsDiffer>
    <experiments>2</experiments>
</comment>
<comment type="interaction">
    <interactant intactId="EBI-714559">
        <id>P32121</id>
    </interactant>
    <interactant intactId="EBI-621482">
        <id>P12931</id>
        <label>SRC</label>
    </interactant>
    <organismsDiffer>false</organismsDiffer>
    <experiments>2</experiments>
</comment>
<comment type="interaction">
    <interactant intactId="EBI-714559">
        <id>P32121</id>
    </interactant>
    <interactant intactId="EBI-458376">
        <id>Q15208</id>
        <label>STK38</label>
    </interactant>
    <organismsDiffer>false</organismsDiffer>
    <experiments>3</experiments>
</comment>
<comment type="interaction">
    <interactant intactId="EBI-714559">
        <id>P32121</id>
    </interactant>
    <interactant intactId="EBI-396105">
        <id>Q13428</id>
        <label>TCOF1</label>
    </interactant>
    <organismsDiffer>false</organismsDiffer>
    <experiments>3</experiments>
</comment>
<comment type="interaction">
    <interactant intactId="EBI-714559">
        <id>P32121</id>
    </interactant>
    <interactant intactId="EBI-359854">
        <id>P27348</id>
        <label>YWHAQ</label>
    </interactant>
    <organismsDiffer>false</organismsDiffer>
    <experiments>3</experiments>
</comment>
<comment type="interaction">
    <interactant intactId="EBI-714559">
        <id>P32121</id>
    </interactant>
    <interactant intactId="EBI-1051583">
        <id>O95218</id>
        <label>ZRANB2</label>
    </interactant>
    <organismsDiffer>false</organismsDiffer>
    <experiments>4</experiments>
</comment>
<comment type="interaction">
    <interactant intactId="EBI-714559">
        <id>P32121</id>
    </interactant>
    <interactant intactId="EBI-298707">
        <id>P31750</id>
        <label>Akt1</label>
    </interactant>
    <organismsDiffer>true</organismsDiffer>
    <experiments>3</experiments>
</comment>
<comment type="interaction">
    <interactant intactId="EBI-714559">
        <id>P32121</id>
    </interactant>
    <interactant intactId="EBI-6248094">
        <id>Q9Q2G4</id>
        <label>ORF</label>
    </interactant>
    <organismsDiffer>true</organismsDiffer>
    <experiments>3</experiments>
</comment>
<comment type="interaction">
    <interactant intactId="EBI-714559">
        <id>P32121</id>
    </interactant>
    <interactant intactId="EBI-867790">
        <id>P40417</id>
        <label>rl</label>
    </interactant>
    <organismsDiffer>true</organismsDiffer>
    <experiments>4</experiments>
</comment>
<comment type="subcellular location">
    <subcellularLocation>
        <location>Cytoplasm</location>
    </subcellularLocation>
    <subcellularLocation>
        <location>Nucleus</location>
    </subcellularLocation>
    <subcellularLocation>
        <location>Cell membrane</location>
    </subcellularLocation>
    <subcellularLocation>
        <location evidence="1">Membrane</location>
        <location evidence="1">Clathrin-coated pit</location>
    </subcellularLocation>
    <subcellularLocation>
        <location>Cytoplasmic vesicle</location>
    </subcellularLocation>
    <text>Translocates to the plasma membrane and colocalizes with antagonist-stimulated GPCRs.</text>
</comment>
<comment type="alternative products">
    <event type="alternative splicing"/>
    <isoform>
        <id>P32121-1</id>
        <name>1</name>
        <sequence type="displayed"/>
    </isoform>
    <isoform>
        <id>P32121-3</id>
        <name>2</name>
        <sequence type="described" ref="VSP_008195"/>
    </isoform>
    <isoform>
        <id>P32121-2</id>
        <name>3</name>
        <sequence type="described" ref="VSP_008194 VSP_008195"/>
    </isoform>
    <isoform>
        <id>P32121-4</id>
        <name>4</name>
        <sequence type="described" ref="VSP_044697"/>
    </isoform>
    <isoform>
        <id>P32121-5</id>
        <name>5</name>
        <sequence type="described" ref="VSP_008194"/>
    </isoform>
</comment>
<comment type="domain">
    <text evidence="1">The [DE]-X(1,2)-F-X-X-[FL]-X-X-X-R motif mediates interaction the AP-2 complex subunit AP2B1.</text>
</comment>
<comment type="PTM">
    <text evidence="6">Phosphorylated at Thr-382 in the cytoplasm; probably dephosphorylated at the plasma membrane. The phosphorylation does not regulate internalization and recycling of ADRB2, interaction with clathrin or AP2B1.</text>
</comment>
<comment type="PTM">
    <text evidence="34 48">The ubiquitination status appears to regulate the formation and trafficking of beta-arrestin-GPCR complexes and signaling. Ubiquitination appears to occur GPCR-specific. Ubiquitinated by MDM2; the ubiquitination is required for rapid internalization of ADRB2. Deubiquitinated by USP33; the deubiquitination leads to a dissociation of the beta-arrestin-GPCR complex. Stimulation of a class A GPCR, such as ADRB2, induces transient ubiquitination and subsequently promotes association with USP33. Stimulation of a class B GPCR promotes a sustained ubiquitination. Deubiquitinated by USP20; allowing USP20 to deubiquitinate TRAF6 leading to inhibition of NF-kappa-B signaling (PubMed:26839314).</text>
</comment>
<comment type="PTM">
    <text evidence="40">Hydroxylation by PHD2 modulates the rate of internalization by slowing down recruitment to the plasma membrane and inhibiting subsequent co-internalization with class A receptors.</text>
</comment>
<comment type="similarity">
    <text evidence="55">Belongs to the arrestin family.</text>
</comment>
<comment type="online information" name="Wikipedia">
    <link uri="https://en.wikipedia.org/wiki/Arrestin"/>
    <text>Arrestin entry</text>
</comment>